<evidence type="ECO:0000250" key="1"/>
<evidence type="ECO:0000250" key="2">
    <source>
        <dbReference type="UniProtKB" id="P05067"/>
    </source>
</evidence>
<evidence type="ECO:0000250" key="3">
    <source>
        <dbReference type="UniProtKB" id="P08592"/>
    </source>
</evidence>
<evidence type="ECO:0000255" key="4"/>
<evidence type="ECO:0000255" key="5">
    <source>
        <dbReference type="PROSITE-ProRule" id="PRU00031"/>
    </source>
</evidence>
<evidence type="ECO:0000255" key="6">
    <source>
        <dbReference type="PROSITE-ProRule" id="PRU01217"/>
    </source>
</evidence>
<evidence type="ECO:0000255" key="7">
    <source>
        <dbReference type="PROSITE-ProRule" id="PRU01218"/>
    </source>
</evidence>
<evidence type="ECO:0000256" key="8">
    <source>
        <dbReference type="SAM" id="MobiDB-lite"/>
    </source>
</evidence>
<evidence type="ECO:0000269" key="9">
    <source>
    </source>
</evidence>
<evidence type="ECO:0000269" key="10">
    <source>
    </source>
</evidence>
<evidence type="ECO:0000269" key="11">
    <source>
    </source>
</evidence>
<evidence type="ECO:0000269" key="12">
    <source>
    </source>
</evidence>
<evidence type="ECO:0000269" key="13">
    <source>
    </source>
</evidence>
<evidence type="ECO:0000269" key="14">
    <source>
    </source>
</evidence>
<evidence type="ECO:0000269" key="15">
    <source>
    </source>
</evidence>
<evidence type="ECO:0000269" key="16">
    <source>
    </source>
</evidence>
<evidence type="ECO:0000269" key="17">
    <source>
    </source>
</evidence>
<evidence type="ECO:0000269" key="18">
    <source>
    </source>
</evidence>
<evidence type="ECO:0000269" key="19">
    <source>
    </source>
</evidence>
<evidence type="ECO:0000269" key="20">
    <source>
    </source>
</evidence>
<evidence type="ECO:0000269" key="21">
    <source>
    </source>
</evidence>
<evidence type="ECO:0000269" key="22">
    <source>
    </source>
</evidence>
<evidence type="ECO:0000269" key="23">
    <source>
    </source>
</evidence>
<evidence type="ECO:0000269" key="24">
    <source>
    </source>
</evidence>
<evidence type="ECO:0000269" key="25">
    <source>
    </source>
</evidence>
<evidence type="ECO:0000269" key="26">
    <source>
    </source>
</evidence>
<evidence type="ECO:0000303" key="27">
    <source>
    </source>
</evidence>
<evidence type="ECO:0000303" key="28">
    <source>
    </source>
</evidence>
<evidence type="ECO:0000303" key="29">
    <source>
    </source>
</evidence>
<evidence type="ECO:0000305" key="30"/>
<evidence type="ECO:0000312" key="31">
    <source>
        <dbReference type="MGI" id="MGI:88059"/>
    </source>
</evidence>
<evidence type="ECO:0007744" key="32">
    <source>
        <dbReference type="PDB" id="2ROZ"/>
    </source>
</evidence>
<evidence type="ECO:0007744" key="33">
    <source>
        <dbReference type="PDB" id="4YN0"/>
    </source>
</evidence>
<evidence type="ECO:0007744" key="34">
    <source>
    </source>
</evidence>
<evidence type="ECO:0007829" key="35">
    <source>
        <dbReference type="PDB" id="2ROZ"/>
    </source>
</evidence>
<evidence type="ECO:0007829" key="36">
    <source>
        <dbReference type="PDB" id="4YN0"/>
    </source>
</evidence>
<evidence type="ECO:0007829" key="37">
    <source>
        <dbReference type="PDB" id="7MRN"/>
    </source>
</evidence>
<name>A4_MOUSE</name>
<accession>P12023</accession>
<accession>P97487</accession>
<accession>P97942</accession>
<accession>Q99K32</accession>
<proteinExistence type="evidence at protein level"/>
<reference key="1">
    <citation type="journal article" date="1987" name="Biochem. Biophys. Res. Commun.">
        <title>Complementary DNA for the mouse homolog of the human amyloid beta protein precursor.</title>
        <authorList>
            <person name="Yamada T."/>
            <person name="Sasaki H."/>
            <person name="Furuya H."/>
            <person name="Miyata T."/>
            <person name="Goto I."/>
            <person name="Sakaki Y."/>
        </authorList>
    </citation>
    <scope>NUCLEOTIDE SEQUENCE [MRNA] (ISOFORM APP695)</scope>
    <source>
        <tissue>Brain</tissue>
    </source>
</reference>
<reference key="2">
    <citation type="submission" date="1988-03" db="EMBL/GenBank/DDBJ databases">
        <authorList>
            <person name="Yamada T."/>
        </authorList>
    </citation>
    <scope>SEQUENCE REVISION</scope>
</reference>
<reference key="3">
    <citation type="journal article" date="1991" name="Biochim. Biophys. Acta">
        <title>The amyloid beta protein precursor or proteinase nexin II from mouse is closer related to its human homolog than previously reported.</title>
        <authorList>
            <person name="de Strooper B."/>
            <person name="van Leuven F."/>
            <person name="van den Berghe H."/>
        </authorList>
    </citation>
    <scope>NUCLEOTIDE SEQUENCE [MRNA] (ISOFORM APP695)</scope>
    <source>
        <strain>BALB/cJ</strain>
        <tissue>Brain</tissue>
    </source>
</reference>
<reference key="4">
    <citation type="journal article" date="2001" name="Biochem. Cell Biol.">
        <title>Molecular cloning, expression, and regulation of hippocampal amyloid precursor protein of senescence accelerated mouse (SAMP8).</title>
        <authorList>
            <person name="Kumar V.B."/>
            <person name="Vyas K."/>
            <person name="Franko M."/>
            <person name="Choudhary V."/>
            <person name="Buddhiraju C."/>
            <person name="Alvarez J."/>
            <person name="Morley J.E."/>
        </authorList>
    </citation>
    <scope>NUCLEOTIDE SEQUENCE [MRNA] (ISOFORM APP695)</scope>
    <source>
        <strain>SAMP8</strain>
        <tissue>Hippocampus</tissue>
    </source>
</reference>
<reference key="5">
    <citation type="journal article" date="1992" name="Gene">
        <title>Positive and negative regulatory elements for the expression of the Alzheimer's disease amyloid precursor-encoding gene in mouse.</title>
        <authorList>
            <person name="Izumi R."/>
            <person name="Yamada T."/>
            <person name="Yoshikai S."/>
            <person name="Sasaki H."/>
            <person name="Hattori M."/>
            <person name="Sakai Y."/>
        </authorList>
    </citation>
    <scope>NUCLEOTIDE SEQUENCE [GENOMIC DNA] OF 1-19</scope>
</reference>
<reference key="6">
    <citation type="journal article" date="2004" name="Genome Res.">
        <title>The status, quality, and expansion of the NIH full-length cDNA project: the Mammalian Gene Collection (MGC).</title>
        <authorList>
            <consortium name="The MGC Project Team"/>
        </authorList>
    </citation>
    <scope>PARTIAL NUCLEOTIDE SEQUENCE [LARGE SCALE MRNA] (ISOFORM APP770)</scope>
    <source>
        <tissue>Mammary tumor</tissue>
    </source>
</reference>
<reference key="7">
    <citation type="journal article" date="1989" name="Biochem. Biophys. Res. Commun.">
        <title>Structure and expression of the alternatively-spliced forms of mRNA for the mouse homolog of Alzheimer's disease amyloid beta protein precursor.</title>
        <authorList>
            <person name="Yamada T."/>
            <person name="Sasaki H."/>
            <person name="Dohura K."/>
            <person name="Goto I."/>
            <person name="Sakaki Y."/>
        </authorList>
    </citation>
    <scope>NUCLEOTIDE SEQUENCE [MRNA] OF 281-380</scope>
    <scope>ALTERNATIVE SPLICING</scope>
    <source>
        <tissue>Brain</tissue>
        <tissue>Kidney</tissue>
    </source>
</reference>
<reference key="8">
    <citation type="journal article" date="1989" name="Nucleic Acids Res.">
        <title>Sequence of the protease inhibitor domain of the A4 amyloid protein precursor of Mus domesticus.</title>
        <authorList>
            <person name="Fukuchi K."/>
            <person name="Martin G.M."/>
            <person name="Deeb S.S."/>
        </authorList>
    </citation>
    <scope>NUCLEOTIDE SEQUENCE [MRNA] OF 289-364</scope>
    <source>
        <strain>CD-1</strain>
        <tissue>Placenta</tissue>
    </source>
</reference>
<reference key="9">
    <citation type="submission" date="1996-12" db="EMBL/GenBank/DDBJ databases">
        <title>Introduction of six mutations into the mouse genome using 'Hit and Run' gene-targeting: introduction of familial Alzheimer's disease mutations into the mouse amyloid precursor protein gene and humanization of the A-beta fragment.</title>
        <authorList>
            <person name="Wragg M.A."/>
            <person name="Busfield F."/>
            <person name="Duff K."/>
            <person name="Korenblat K."/>
            <person name="Capecchi M."/>
            <person name="Loring J.F."/>
            <person name="Goate A.M."/>
        </authorList>
    </citation>
    <scope>NUCLEOTIDE SEQUENCE [GENOMIC DNA] OF 656-737</scope>
    <source>
        <strain>129/Sv</strain>
    </source>
</reference>
<reference key="10">
    <citation type="journal article" date="1993" name="Brain Res. Mol. Brain Res.">
        <title>Regional distribution of the alternatively spliced isoforms of beta APP RNA transcript in the brain of normal, heterozygous and homozygous weaver mutant mice as revealed by in situ hybridization histochemistry.</title>
        <authorList>
            <person name="Sola C."/>
            <person name="Mengod G."/>
            <person name="Ghetti B."/>
            <person name="Palacios J.M."/>
            <person name="Triarhou L.C."/>
        </authorList>
    </citation>
    <scope>TISSUE SPECIFICITY OF ALTERNATIVE SPLICED FORMS</scope>
</reference>
<reference key="11">
    <citation type="journal article" date="2000" name="Neuron">
        <title>Axonal transport of amyloid precursor protein is mediated by direct binding to the kinesin light chain subunit of kinesin-I.</title>
        <authorList>
            <person name="Kamal A."/>
            <person name="Stokin G.B."/>
            <person name="Yang Z."/>
            <person name="Xia C.-H."/>
            <person name="Goldstein L.S."/>
        </authorList>
    </citation>
    <scope>INTERACTION WITH KNS2</scope>
</reference>
<reference key="12">
    <citation type="journal article" date="2001" name="J. Biol. Chem.">
        <title>The beta-amyloid precursor protein APP is tyrosine-phosphorylated in cells expressing a constitutively active form of the Abl protoncogene.</title>
        <authorList>
            <person name="Zambrano N."/>
            <person name="Bruni P."/>
            <person name="Minopoli G."/>
            <person name="Mosca R."/>
            <person name="Molino D."/>
            <person name="Russo C."/>
            <person name="Schettini G."/>
            <person name="Sudol M."/>
            <person name="Russo T."/>
        </authorList>
    </citation>
    <scope>PHOSPHORYLATION AT TYR-757</scope>
</reference>
<reference key="13">
    <citation type="journal article" date="2001" name="J. Neurochem.">
        <title>The amyloid precursor protein (APP)-cytoplasmic fragment generated by gamma-secretase is rapidly degraded but distributes partially in a nuclear fraction of neurons in culture.</title>
        <authorList>
            <person name="Cupers P."/>
            <person name="Orlans I."/>
            <person name="Craessaerts K."/>
            <person name="Annaert W."/>
            <person name="De Strooper B."/>
        </authorList>
    </citation>
    <scope>PROTEOLYTIC PROCESSING BY GAMMA SECRETASE</scope>
    <scope>INTERACTION WITH APBB1</scope>
</reference>
<reference key="14">
    <citation type="journal article" date="2001" name="J. Neurosci.">
        <title>C-jun N-terminal kinase (JNK)-interacting protein-1b/islet-brain-1 scaffolds Alzheimer's amyloid precursor protein with JNK.</title>
        <authorList>
            <person name="Matsuda S."/>
            <person name="Yasukawa T."/>
            <person name="Homma Y."/>
            <person name="Ito Y."/>
            <person name="Niikura T."/>
            <person name="Hiraki T."/>
            <person name="Hirai S."/>
            <person name="Ohno S."/>
            <person name="Kita Y."/>
            <person name="Kawasumi M."/>
            <person name="Kouyama K."/>
            <person name="Yamamoto T."/>
            <person name="Kyriakis J.M."/>
            <person name="Nishimoto I."/>
        </authorList>
    </citation>
    <scope>C-TERMINAL PROTEIN-PROTEIN INTERACTION</scope>
    <scope>MUTAGENESIS OF TYR-728; THR-743; TYR-757; ASN-759 AND TYR-762</scope>
</reference>
<reference key="15">
    <citation type="journal article" date="2001" name="Traffic">
        <title>Disabled-2 colocalizes with the LDLR in clathrin-coated pits and interacts with AP-2.</title>
        <authorList>
            <person name="Morris S.M."/>
            <person name="Cooper J.A."/>
        </authorList>
    </citation>
    <scope>INTERACTION WITH DAB2</scope>
    <scope>MUTAGENESIS OF GLY-756; TYR-757; ASN-759; PRO-760 AND TYR-762</scope>
</reference>
<reference key="16">
    <citation type="journal article" date="2002" name="J. Biol. Chem.">
        <title>Interaction of Alzheimer's beta-amyloid precursor family proteins with scaffold proteins of the JNK signaling cascade.</title>
        <authorList>
            <person name="Taru H."/>
            <person name="Iijima K."/>
            <person name="Hase M."/>
            <person name="Kirino Y."/>
            <person name="Yagi Y."/>
            <person name="Suzuki T."/>
        </authorList>
    </citation>
    <scope>INTERACTION WITH MAPK8IP1</scope>
    <scope>PHOSPHORYLATION</scope>
</reference>
<reference key="17">
    <citation type="journal article" date="2002" name="Proc. Natl. Acad. Sci. U.S.A.">
        <title>The gamma-secretase-generated intracellular domain of beta-amyloid precursor protein binds Numb and inhibits Notch signaling.</title>
        <authorList>
            <person name="Roncarati R."/>
            <person name="Sestan N."/>
            <person name="Scheinfeld M.H."/>
            <person name="Berechid B.E."/>
            <person name="Lopez P.A."/>
            <person name="Meucci O."/>
            <person name="McGlade J.C."/>
            <person name="Rakic P."/>
            <person name="D'Adamio L."/>
        </authorList>
    </citation>
    <scope>INTERACTION OF CTF PEPTIDES WITH NUMB</scope>
</reference>
<reference key="18">
    <citation type="journal article" date="2003" name="Proc. Natl. Acad. Sci. U.S.A.">
        <title>Insulin-degrading enzyme regulates the levels of insulin, amyloid beta-protein, and the beta-amyloid precursor protein intracellular domain in vivo.</title>
        <authorList>
            <person name="Farris W."/>
            <person name="Mansourian S."/>
            <person name="Chang Y."/>
            <person name="Lindsley L."/>
            <person name="Eckman E.A."/>
            <person name="Frosch M.P."/>
            <person name="Eckman C.B."/>
            <person name="Tanzi R.E."/>
            <person name="Selkoe D.J."/>
            <person name="Guenette S."/>
        </authorList>
    </citation>
    <scope>PROTEOLYTIC DEGRADATION BY IDE</scope>
</reference>
<reference key="19">
    <citation type="journal article" date="2005" name="J. Biol. Chem.">
        <title>The amyloid precursor protein (APP) of Alzheimer disease and its paralog, APLP2, modulate the Cu/Zn-nitric oxide-catalyzed degradation of glypican-1 heparan sulfate in vivo.</title>
        <authorList>
            <person name="Cappai R."/>
            <person name="Cheng F."/>
            <person name="Ciccotosto G.D."/>
            <person name="Needham B.E."/>
            <person name="Masters C.L."/>
            <person name="Multhaup G."/>
            <person name="Fransson L.A."/>
            <person name="Mani K."/>
        </authorList>
    </citation>
    <scope>SUBCELLULAR LOCATION</scope>
    <scope>FUNCTION</scope>
</reference>
<reference key="20">
    <citation type="journal article" date="2005" name="Mol. Cell. Biol.">
        <title>Amyloid precursor proteins anchor CPEB to membranes and promote polyadenylation-induced translation.</title>
        <authorList>
            <person name="Cao Q."/>
            <person name="Huang Y.-S."/>
            <person name="Kan M.-C."/>
            <person name="Richter J.D."/>
        </authorList>
    </citation>
    <scope>INTERACTION WITH CPEB1</scope>
</reference>
<reference key="21">
    <citation type="journal article" date="2005" name="Proc. Natl. Acad. Sci. U.S.A.">
        <title>Neuronal sorting protein-related receptor sorLA/LR11 regulates processing of the amyloid precursor protein.</title>
        <authorList>
            <person name="Andersen O.M."/>
            <person name="Reiche J."/>
            <person name="Schmidt V."/>
            <person name="Gotthardt M."/>
            <person name="Spoelgen R."/>
            <person name="Behlke J."/>
            <person name="von Arnim C.A."/>
            <person name="Breiderhoff T."/>
            <person name="Jansen P."/>
            <person name="Wu X."/>
            <person name="Bales K.R."/>
            <person name="Cappai R."/>
            <person name="Masters C.L."/>
            <person name="Gliemann J."/>
            <person name="Mufson E.J."/>
            <person name="Hyman B.T."/>
            <person name="Paul S.M."/>
            <person name="Nykjaer A."/>
            <person name="Willnow T.E."/>
        </authorList>
    </citation>
    <scope>INTERACTION WITH SORL1</scope>
</reference>
<reference key="22">
    <citation type="journal article" date="2006" name="J. Neurosci.">
        <title>Interaction of the cytosolic domains of sorLA/LR11 with the amyloid precursor protein (APP) and beta-secretase beta-site APP-cleaving enzyme.</title>
        <authorList>
            <person name="Spoelgen R."/>
            <person name="von Arnim C.A."/>
            <person name="Thomas A.V."/>
            <person name="Peltan I.D."/>
            <person name="Koker M."/>
            <person name="Deng A."/>
            <person name="Irizarry M.C."/>
            <person name="Andersen O.M."/>
            <person name="Willnow T.E."/>
            <person name="Hyman B.T."/>
        </authorList>
    </citation>
    <scope>INTERACTION WITH SORL1</scope>
</reference>
<reference key="23">
    <citation type="journal article" date="2010" name="Cell">
        <title>A tissue-specific atlas of mouse protein phosphorylation and expression.</title>
        <authorList>
            <person name="Huttlin E.L."/>
            <person name="Jedrychowski M.P."/>
            <person name="Elias J.E."/>
            <person name="Goswami T."/>
            <person name="Rad R."/>
            <person name="Beausoleil S.A."/>
            <person name="Villen J."/>
            <person name="Haas W."/>
            <person name="Sowa M.E."/>
            <person name="Gygi S.P."/>
        </authorList>
    </citation>
    <scope>PHOSPHORYLATION [LARGE SCALE ANALYSIS] AT SER-441</scope>
    <scope>IDENTIFICATION BY MASS SPECTROMETRY [LARGE SCALE ANALYSIS]</scope>
    <source>
        <tissue>Brain</tissue>
        <tissue>Kidney</tissue>
        <tissue>Lung</tissue>
        <tissue>Pancreas</tissue>
        <tissue>Testis</tissue>
    </source>
</reference>
<reference key="24">
    <citation type="journal article" date="2010" name="J. Neurosci.">
        <title>Identification of NEEP21 as a ss-amyloid precursor protein-interacting protein in vivo that modulates amyloidogenic processing in vitro.</title>
        <authorList>
            <person name="Norstrom E.M."/>
            <person name="Zhang C."/>
            <person name="Tanzi R."/>
            <person name="Sisodia S.S."/>
        </authorList>
    </citation>
    <scope>INTERACTION WITH NGS1</scope>
</reference>
<reference key="25">
    <citation type="journal article" date="2013" name="Neuron">
        <title>Activity-induced convergence of APP and BACE-1 in acidic microdomains via an endocytosis-dependent pathway.</title>
        <authorList>
            <person name="Das U."/>
            <person name="Scott D.A."/>
            <person name="Ganguly A."/>
            <person name="Koo E.H."/>
            <person name="Tang Y."/>
            <person name="Roy S."/>
        </authorList>
    </citation>
    <scope>SUBCELLULAR LOCATION</scope>
    <scope>PROTEOLYTIC CLEAVAGE</scope>
</reference>
<reference key="26">
    <citation type="journal article" date="2014" name="Neuroscience">
        <title>Abeta promotes VDAC1 channel dephosphorylation in neuronal lipid rafts. Relevance to the mechanisms of neurotoxicity in Alzheimer's disease.</title>
        <authorList>
            <person name="Fernandez-Echevarria C."/>
            <person name="Diaz M."/>
            <person name="Ferrer I."/>
            <person name="Canerina-Amaro A."/>
            <person name="Marin R."/>
        </authorList>
    </citation>
    <scope>INTERACTION WITH VDAC1</scope>
</reference>
<reference key="27">
    <citation type="journal article" date="2015" name="EMBO Mol. Med.">
        <title>An aberrant sugar modification of BACE1 blocks its lysosomal targeting in Alzheimer's disease.</title>
        <authorList>
            <person name="Kizuka Y."/>
            <person name="Kitazume S."/>
            <person name="Fujinawa R."/>
            <person name="Saito T."/>
            <person name="Iwata N."/>
            <person name="Saido T.C."/>
            <person name="Nakano M."/>
            <person name="Yamaguchi Y."/>
            <person name="Hashimoto Y."/>
            <person name="Staufenbiel M."/>
            <person name="Hatsuta H."/>
            <person name="Murayama S."/>
            <person name="Manya H."/>
            <person name="Endo T."/>
            <person name="Taniguchi N."/>
        </authorList>
    </citation>
    <scope>SUBCELLULAR LOCATION</scope>
</reference>
<reference key="28">
    <citation type="journal article" date="2015" name="FASEB J.">
        <title>FE65 and FE65L1 amyloid precursor protein-binding protein compound null mice display adult-onset cataract and muscle weakness.</title>
        <authorList>
            <person name="Suh J."/>
            <person name="Moncaster J.A."/>
            <person name="Wang L."/>
            <person name="Hafeez I."/>
            <person name="Herz J."/>
            <person name="Tanzi R.E."/>
            <person name="Goldstein L.E."/>
            <person name="Guenette S.Y."/>
        </authorList>
    </citation>
    <scope>TISSUE SPECIFICITY</scope>
</reference>
<reference key="29">
    <citation type="journal article" date="2015" name="J. Biol. Chem.">
        <title>ATP-binding cassette transporter A7 (ABCA7) loss of function alters Alzheimer amyloid processing.</title>
        <authorList>
            <person name="Satoh K."/>
            <person name="Abe-Dohmae S."/>
            <person name="Yokoyama S."/>
            <person name="St George-Hyslop P."/>
            <person name="Fraser P.E."/>
        </authorList>
    </citation>
    <scope>SUBCELLULAR LOCATION</scope>
    <scope>TISSUE SPECIFICITY</scope>
    <scope>DEVELOPMENTAL STAGE</scope>
    <scope>INDUCTION BY HIGH-FAT DIET</scope>
</reference>
<reference key="30">
    <citation type="journal article" date="2017" name="Sci. Signal.">
        <title>Phosphorylation of amyloid precursor protein by mutant LRRK2 promotes AICD activity and neurotoxicity in Parkinson's disease.</title>
        <authorList>
            <person name="Chen Z.C."/>
            <person name="Zhang W."/>
            <person name="Chua L.L."/>
            <person name="Chai C."/>
            <person name="Li R."/>
            <person name="Lin L."/>
            <person name="Cao Z."/>
            <person name="Angeles D.C."/>
            <person name="Stanton L.W."/>
            <person name="Peng J.H."/>
            <person name="Zhou Z.D."/>
            <person name="Lim K.L."/>
            <person name="Zeng L."/>
            <person name="Tan E.K."/>
        </authorList>
    </citation>
    <scope>INTERACTION WITH LRRK2</scope>
    <scope>SUBCELLULAR LOCATION</scope>
    <scope>TISSUE SPECIFICITY</scope>
    <scope>PHOSPHORYLATION AT THR-743</scope>
</reference>
<reference key="31">
    <citation type="journal article" date="2018" name="Nat. Commun.">
        <title>Presenilin-mediated cleavage of APP regulates synaptotagmin-7 and presynaptic plasticity.</title>
        <authorList>
            <person name="Barthet G."/>
            <person name="Jorda-Siquier T."/>
            <person name="Rumi-Masante J."/>
            <person name="Bernadou F."/>
            <person name="Mueller U."/>
            <person name="Mulle C."/>
        </authorList>
    </citation>
    <scope>INTERACTION WITH SYT7</scope>
</reference>
<reference evidence="32" key="32">
    <citation type="journal article" date="2008" name="J. Biol. Chem.">
        <title>Structure of the C-terminal phosphotyrosine interaction domain of Fe65L1 complexed with the cytoplasmic tail of amyloid precursor protein reveals a novel peptide binding mode.</title>
        <authorList>
            <person name="Li H."/>
            <person name="Koshiba S."/>
            <person name="Hayashi F."/>
            <person name="Tochio N."/>
            <person name="Tomizawa T."/>
            <person name="Kasai T."/>
            <person name="Yabuki T."/>
            <person name="Motoda Y."/>
            <person name="Harada T."/>
            <person name="Watanabe S."/>
            <person name="Inoue M."/>
            <person name="Hayashizaki Y."/>
            <person name="Tanaka A."/>
            <person name="Kigawa T."/>
            <person name="Yokoyama S."/>
        </authorList>
    </citation>
    <scope>STRUCTURE BY NMR OF 739-770</scope>
    <scope>INTERACTION WITH APBB2</scope>
</reference>
<gene>
    <name evidence="31" type="primary">App</name>
    <name evidence="2" type="synonym">A4</name>
    <name evidence="2" type="synonym">AD1</name>
</gene>
<dbReference type="EMBL" id="M18373">
    <property type="protein sequence ID" value="AAA37139.1"/>
    <property type="molecule type" value="mRNA"/>
</dbReference>
<dbReference type="EMBL" id="X59379">
    <property type="status" value="NOT_ANNOTATED_CDS"/>
    <property type="molecule type" value="mRNA"/>
</dbReference>
<dbReference type="EMBL" id="U84012">
    <property type="protein sequence ID" value="AAB41502.1"/>
    <property type="molecule type" value="mRNA"/>
</dbReference>
<dbReference type="EMBL" id="D10603">
    <property type="protein sequence ID" value="BAA01456.1"/>
    <property type="molecule type" value="Genomic_DNA"/>
</dbReference>
<dbReference type="EMBL" id="BC005490">
    <property type="protein sequence ID" value="AAH05490.1"/>
    <property type="molecule type" value="mRNA"/>
</dbReference>
<dbReference type="EMBL" id="M24397">
    <property type="protein sequence ID" value="AAA39929.1"/>
    <property type="molecule type" value="mRNA"/>
</dbReference>
<dbReference type="EMBL" id="X15210">
    <property type="protein sequence ID" value="CAA33280.1"/>
    <property type="molecule type" value="mRNA"/>
</dbReference>
<dbReference type="EMBL" id="U82624">
    <property type="protein sequence ID" value="AAB40919.1"/>
    <property type="molecule type" value="Genomic_DNA"/>
</dbReference>
<dbReference type="CCDS" id="CCDS28285.1">
    <molecule id="P12023-2"/>
</dbReference>
<dbReference type="CCDS" id="CCDS88958.1">
    <molecule id="P12023-1"/>
</dbReference>
<dbReference type="PIR" id="A27485">
    <property type="entry name" value="A27485"/>
</dbReference>
<dbReference type="PIR" id="A32282">
    <property type="entry name" value="A32282"/>
</dbReference>
<dbReference type="PIR" id="S04855">
    <property type="entry name" value="S04855"/>
</dbReference>
<dbReference type="RefSeq" id="NP_001185752.1">
    <molecule id="P12023-1"/>
    <property type="nucleotide sequence ID" value="NM_001198823.1"/>
</dbReference>
<dbReference type="PDB" id="2ROZ">
    <property type="method" value="NMR"/>
    <property type="chains" value="A=739-770"/>
</dbReference>
<dbReference type="PDB" id="2YSZ">
    <property type="method" value="NMR"/>
    <property type="chains" value="A=739-770"/>
</dbReference>
<dbReference type="PDB" id="2YT0">
    <property type="method" value="NMR"/>
    <property type="chains" value="A=739-770"/>
</dbReference>
<dbReference type="PDB" id="2YT1">
    <property type="method" value="NMR"/>
    <property type="chains" value="A=739-770"/>
</dbReference>
<dbReference type="PDB" id="4YN0">
    <property type="method" value="X-ray"/>
    <property type="resolution" value="2.20 A"/>
    <property type="chains" value="B=370-592"/>
</dbReference>
<dbReference type="PDB" id="5MYK">
    <property type="method" value="X-ray"/>
    <property type="resolution" value="1.60 A"/>
    <property type="chains" value="C=674-689"/>
</dbReference>
<dbReference type="PDB" id="7MRN">
    <property type="method" value="X-ray"/>
    <property type="resolution" value="3.50 A"/>
    <property type="chains" value="C/D=19-190"/>
</dbReference>
<dbReference type="PDB" id="8BG9">
    <property type="method" value="EM"/>
    <property type="resolution" value="3.50 A"/>
    <property type="chains" value="A/B=672-708"/>
</dbReference>
<dbReference type="PDB" id="8S4Y">
    <property type="method" value="X-ray"/>
    <property type="resolution" value="2.70 A"/>
    <property type="chains" value="A=754-764"/>
</dbReference>
<dbReference type="PDBsum" id="2ROZ"/>
<dbReference type="PDBsum" id="2YSZ"/>
<dbReference type="PDBsum" id="2YT0"/>
<dbReference type="PDBsum" id="2YT1"/>
<dbReference type="PDBsum" id="4YN0"/>
<dbReference type="PDBsum" id="5MYK"/>
<dbReference type="PDBsum" id="7MRN"/>
<dbReference type="PDBsum" id="8BG9"/>
<dbReference type="PDBsum" id="8S4Y"/>
<dbReference type="BMRB" id="P12023"/>
<dbReference type="EMDB" id="EMD-16027"/>
<dbReference type="SMR" id="P12023"/>
<dbReference type="BioGRID" id="198167">
    <property type="interactions" value="178"/>
</dbReference>
<dbReference type="ComplexPortal" id="CPX-1105">
    <property type="entry name" value="Amyloid-beta protein 40/42 complex"/>
</dbReference>
<dbReference type="ComplexPortal" id="CPX-1106">
    <property type="entry name" value="Amyloid-beta protein 40 complex"/>
</dbReference>
<dbReference type="ComplexPortal" id="CPX-1107">
    <property type="entry name" value="Amyloid-beta protein 42 complex"/>
</dbReference>
<dbReference type="ComplexPortal" id="CPX-1121">
    <property type="entry name" value="Amyloid-beta protein 40/42 oligomeric complex"/>
</dbReference>
<dbReference type="ComplexPortal" id="CPX-1139">
    <property type="entry name" value="Amyloid-beta protein 42 oligomeric complex"/>
</dbReference>
<dbReference type="ComplexPortal" id="CPX-1181">
    <property type="entry name" value="Amyloid-beta protein 40 oligomeric complex"/>
</dbReference>
<dbReference type="CORUM" id="P12023"/>
<dbReference type="ELM" id="P12023"/>
<dbReference type="FunCoup" id="P12023">
    <property type="interactions" value="1315"/>
</dbReference>
<dbReference type="IntAct" id="P12023">
    <property type="interactions" value="85"/>
</dbReference>
<dbReference type="MINT" id="P12023"/>
<dbReference type="STRING" id="10090.ENSMUSP00000005406"/>
<dbReference type="ChEMBL" id="CHEMBL4523942"/>
<dbReference type="MEROPS" id="I02.015"/>
<dbReference type="GlyCosmos" id="P12023">
    <property type="glycosylation" value="2 sites, No reported glycans"/>
</dbReference>
<dbReference type="GlyGen" id="P12023">
    <property type="glycosylation" value="5 sites, 1 N-linked glycan (1 site), 1 O-linked glycan (3 sites)"/>
</dbReference>
<dbReference type="iPTMnet" id="P12023"/>
<dbReference type="PhosphoSitePlus" id="P12023"/>
<dbReference type="SwissPalm" id="P12023"/>
<dbReference type="jPOST" id="P12023"/>
<dbReference type="PeptideAtlas" id="P12023"/>
<dbReference type="ProteomicsDB" id="285696">
    <molecule id="P12023-1"/>
</dbReference>
<dbReference type="ProteomicsDB" id="285697">
    <molecule id="P12023-2"/>
</dbReference>
<dbReference type="ProteomicsDB" id="285698">
    <molecule id="P12023-3"/>
</dbReference>
<dbReference type="Pumba" id="P12023"/>
<dbReference type="ABCD" id="P12023">
    <property type="antibodies" value="5 sequenced antibodies"/>
</dbReference>
<dbReference type="Antibodypedia" id="668">
    <property type="antibodies" value="4415 antibodies from 54 providers"/>
</dbReference>
<dbReference type="DNASU" id="11820"/>
<dbReference type="Ensembl" id="ENSMUST00000005406.12">
    <molecule id="P12023-2"/>
    <property type="protein sequence ID" value="ENSMUSP00000005406.11"/>
    <property type="gene ID" value="ENSMUSG00000022892.12"/>
</dbReference>
<dbReference type="Ensembl" id="ENSMUST00000227723.2">
    <molecule id="P12023-1"/>
    <property type="protein sequence ID" value="ENSMUSP00000154061.2"/>
    <property type="gene ID" value="ENSMUSG00000022892.12"/>
</dbReference>
<dbReference type="GeneID" id="11820"/>
<dbReference type="KEGG" id="mmu:11820"/>
<dbReference type="UCSC" id="uc007ztn.2">
    <molecule id="P12023-1"/>
    <property type="organism name" value="mouse"/>
</dbReference>
<dbReference type="AGR" id="MGI:88059"/>
<dbReference type="CTD" id="351"/>
<dbReference type="MGI" id="MGI:88059">
    <property type="gene designation" value="App"/>
</dbReference>
<dbReference type="VEuPathDB" id="HostDB:ENSMUSG00000022892"/>
<dbReference type="eggNOG" id="KOG3540">
    <property type="taxonomic scope" value="Eukaryota"/>
</dbReference>
<dbReference type="GeneTree" id="ENSGT00530000063252"/>
<dbReference type="HOGENOM" id="CLU_014607_2_1_1"/>
<dbReference type="InParanoid" id="P12023"/>
<dbReference type="OMA" id="ANWTNEH"/>
<dbReference type="OrthoDB" id="6147836at2759"/>
<dbReference type="PhylomeDB" id="P12023"/>
<dbReference type="TreeFam" id="TF317274"/>
<dbReference type="Reactome" id="R-MMU-114608">
    <property type="pathway name" value="Platelet degranulation"/>
</dbReference>
<dbReference type="Reactome" id="R-MMU-3000178">
    <property type="pathway name" value="ECM proteoglycans"/>
</dbReference>
<dbReference type="Reactome" id="R-MMU-381426">
    <property type="pathway name" value="Regulation of Insulin-like Growth Factor (IGF) transport and uptake by Insulin-like Growth Factor Binding Proteins (IGFBPs)"/>
</dbReference>
<dbReference type="Reactome" id="R-MMU-416476">
    <property type="pathway name" value="G alpha (q) signalling events"/>
</dbReference>
<dbReference type="Reactome" id="R-MMU-418594">
    <property type="pathway name" value="G alpha (i) signalling events"/>
</dbReference>
<dbReference type="Reactome" id="R-MMU-432720">
    <property type="pathway name" value="Lysosome Vesicle Biogenesis"/>
</dbReference>
<dbReference type="Reactome" id="R-MMU-444473">
    <property type="pathway name" value="Formyl peptide receptors bind formyl peptides and many other ligands"/>
</dbReference>
<dbReference type="Reactome" id="R-MMU-445989">
    <property type="pathway name" value="TAK1-dependent IKK and NF-kappa-B activation"/>
</dbReference>
<dbReference type="Reactome" id="R-MMU-879415">
    <property type="pathway name" value="Advanced glycosylation endproduct receptor signaling"/>
</dbReference>
<dbReference type="Reactome" id="R-MMU-8957275">
    <property type="pathway name" value="Post-translational protein phosphorylation"/>
</dbReference>
<dbReference type="Reactome" id="R-MMU-933542">
    <property type="pathway name" value="TRAF6 mediated NF-kB activation"/>
</dbReference>
<dbReference type="Reactome" id="R-MMU-9609523">
    <property type="pathway name" value="Insertion of tail-anchored proteins into the endoplasmic reticulum membrane"/>
</dbReference>
<dbReference type="Reactome" id="R-MMU-9837999">
    <property type="pathway name" value="Mitochondrial protein degradation"/>
</dbReference>
<dbReference type="BioGRID-ORCS" id="11820">
    <property type="hits" value="1 hit in 77 CRISPR screens"/>
</dbReference>
<dbReference type="CD-CODE" id="01CA17F3">
    <property type="entry name" value="Centrosome"/>
</dbReference>
<dbReference type="ChiTaRS" id="App">
    <property type="organism name" value="mouse"/>
</dbReference>
<dbReference type="EvolutionaryTrace" id="P12023"/>
<dbReference type="PRO" id="PR:P12023"/>
<dbReference type="Proteomes" id="UP000000589">
    <property type="component" value="Chromosome 16"/>
</dbReference>
<dbReference type="RNAct" id="P12023">
    <property type="molecule type" value="protein"/>
</dbReference>
<dbReference type="Bgee" id="ENSMUSG00000022892">
    <property type="expression patterns" value="Expressed in ciliary body and 287 other cell types or tissues"/>
</dbReference>
<dbReference type="ExpressionAtlas" id="P12023">
    <property type="expression patterns" value="baseline and differential"/>
</dbReference>
<dbReference type="GO" id="GO:0045177">
    <property type="term" value="C:apical part of cell"/>
    <property type="evidence" value="ECO:0000314"/>
    <property type="project" value="MGI"/>
</dbReference>
<dbReference type="GO" id="GO:0030424">
    <property type="term" value="C:axon"/>
    <property type="evidence" value="ECO:0000314"/>
    <property type="project" value="UniProtKB"/>
</dbReference>
<dbReference type="GO" id="GO:0009986">
    <property type="term" value="C:cell surface"/>
    <property type="evidence" value="ECO:0000314"/>
    <property type="project" value="MGI"/>
</dbReference>
<dbReference type="GO" id="GO:0005911">
    <property type="term" value="C:cell-cell junction"/>
    <property type="evidence" value="ECO:0000314"/>
    <property type="project" value="MGI"/>
</dbReference>
<dbReference type="GO" id="GO:0035253">
    <property type="term" value="C:ciliary rootlet"/>
    <property type="evidence" value="ECO:0000314"/>
    <property type="project" value="MGI"/>
</dbReference>
<dbReference type="GO" id="GO:0005905">
    <property type="term" value="C:clathrin-coated pit"/>
    <property type="evidence" value="ECO:0007669"/>
    <property type="project" value="UniProtKB-SubCell"/>
</dbReference>
<dbReference type="GO" id="GO:0030134">
    <property type="term" value="C:COPII-coated ER to Golgi transport vesicle"/>
    <property type="evidence" value="ECO:0000314"/>
    <property type="project" value="MGI"/>
</dbReference>
<dbReference type="GO" id="GO:0005737">
    <property type="term" value="C:cytoplasm"/>
    <property type="evidence" value="ECO:0000314"/>
    <property type="project" value="MGI"/>
</dbReference>
<dbReference type="GO" id="GO:0031410">
    <property type="term" value="C:cytoplasmic vesicle"/>
    <property type="evidence" value="ECO:0000314"/>
    <property type="project" value="MGI"/>
</dbReference>
<dbReference type="GO" id="GO:0005769">
    <property type="term" value="C:early endosome"/>
    <property type="evidence" value="ECO:0000314"/>
    <property type="project" value="MGI"/>
</dbReference>
<dbReference type="GO" id="GO:0005783">
    <property type="term" value="C:endoplasmic reticulum"/>
    <property type="evidence" value="ECO:0000250"/>
    <property type="project" value="UniProtKB"/>
</dbReference>
<dbReference type="GO" id="GO:0005576">
    <property type="term" value="C:extracellular region"/>
    <property type="evidence" value="ECO:0007669"/>
    <property type="project" value="UniProtKB-SubCell"/>
</dbReference>
<dbReference type="GO" id="GO:0005794">
    <property type="term" value="C:Golgi apparatus"/>
    <property type="evidence" value="ECO:0000314"/>
    <property type="project" value="MGI"/>
</dbReference>
<dbReference type="GO" id="GO:0005798">
    <property type="term" value="C:Golgi-associated vesicle"/>
    <property type="evidence" value="ECO:0000314"/>
    <property type="project" value="UniProtKB"/>
</dbReference>
<dbReference type="GO" id="GO:0030426">
    <property type="term" value="C:growth cone"/>
    <property type="evidence" value="ECO:0007669"/>
    <property type="project" value="UniProtKB-SubCell"/>
</dbReference>
<dbReference type="GO" id="GO:0097708">
    <property type="term" value="C:intracellular vesicle"/>
    <property type="evidence" value="ECO:0000314"/>
    <property type="project" value="MGI"/>
</dbReference>
<dbReference type="GO" id="GO:0016020">
    <property type="term" value="C:membrane"/>
    <property type="evidence" value="ECO:0000314"/>
    <property type="project" value="MGI"/>
</dbReference>
<dbReference type="GO" id="GO:0031594">
    <property type="term" value="C:neuromuscular junction"/>
    <property type="evidence" value="ECO:0000314"/>
    <property type="project" value="MGI"/>
</dbReference>
<dbReference type="GO" id="GO:0043005">
    <property type="term" value="C:neuron projection"/>
    <property type="evidence" value="ECO:0000314"/>
    <property type="project" value="MGI"/>
</dbReference>
<dbReference type="GO" id="GO:0005634">
    <property type="term" value="C:nucleus"/>
    <property type="evidence" value="ECO:0007669"/>
    <property type="project" value="UniProtKB-SubCell"/>
</dbReference>
<dbReference type="GO" id="GO:0043204">
    <property type="term" value="C:perikaryon"/>
    <property type="evidence" value="ECO:0007669"/>
    <property type="project" value="UniProtKB-SubCell"/>
</dbReference>
<dbReference type="GO" id="GO:0048471">
    <property type="term" value="C:perinuclear region of cytoplasm"/>
    <property type="evidence" value="ECO:0000314"/>
    <property type="project" value="MGI"/>
</dbReference>
<dbReference type="GO" id="GO:0005886">
    <property type="term" value="C:plasma membrane"/>
    <property type="evidence" value="ECO:0000314"/>
    <property type="project" value="MGI"/>
</dbReference>
<dbReference type="GO" id="GO:0048786">
    <property type="term" value="C:presynaptic active zone"/>
    <property type="evidence" value="ECO:0000314"/>
    <property type="project" value="SynGO"/>
</dbReference>
<dbReference type="GO" id="GO:0043235">
    <property type="term" value="C:receptor complex"/>
    <property type="evidence" value="ECO:0000266"/>
    <property type="project" value="MGI"/>
</dbReference>
<dbReference type="GO" id="GO:0055037">
    <property type="term" value="C:recycling endosome"/>
    <property type="evidence" value="ECO:0000314"/>
    <property type="project" value="UniProtKB"/>
</dbReference>
<dbReference type="GO" id="GO:0005790">
    <property type="term" value="C:smooth endoplasmic reticulum"/>
    <property type="evidence" value="ECO:0007669"/>
    <property type="project" value="GOC"/>
</dbReference>
<dbReference type="GO" id="GO:0051233">
    <property type="term" value="C:spindle midzone"/>
    <property type="evidence" value="ECO:0000314"/>
    <property type="project" value="MGI"/>
</dbReference>
<dbReference type="GO" id="GO:0008021">
    <property type="term" value="C:synaptic vesicle"/>
    <property type="evidence" value="ECO:0000314"/>
    <property type="project" value="MGI"/>
</dbReference>
<dbReference type="GO" id="GO:0008201">
    <property type="term" value="F:heparin binding"/>
    <property type="evidence" value="ECO:0007669"/>
    <property type="project" value="UniProtKB-KW"/>
</dbReference>
<dbReference type="GO" id="GO:0042802">
    <property type="term" value="F:identical protein binding"/>
    <property type="evidence" value="ECO:0000266"/>
    <property type="project" value="MGI"/>
</dbReference>
<dbReference type="GO" id="GO:0019904">
    <property type="term" value="F:protein domain specific binding"/>
    <property type="evidence" value="ECO:0000314"/>
    <property type="project" value="MGI"/>
</dbReference>
<dbReference type="GO" id="GO:0019901">
    <property type="term" value="F:protein kinase binding"/>
    <property type="evidence" value="ECO:0000353"/>
    <property type="project" value="ARUK-UCL"/>
</dbReference>
<dbReference type="GO" id="GO:0000978">
    <property type="term" value="F:RNA polymerase II cis-regulatory region sequence-specific DNA binding"/>
    <property type="evidence" value="ECO:0000314"/>
    <property type="project" value="MGI"/>
</dbReference>
<dbReference type="GO" id="GO:0004867">
    <property type="term" value="F:serine-type endopeptidase inhibitor activity"/>
    <property type="evidence" value="ECO:0007669"/>
    <property type="project" value="UniProtKB-KW"/>
</dbReference>
<dbReference type="GO" id="GO:0030546">
    <property type="term" value="F:signaling receptor activator activity"/>
    <property type="evidence" value="ECO:0000314"/>
    <property type="project" value="ARUK-UCL"/>
</dbReference>
<dbReference type="GO" id="GO:0046914">
    <property type="term" value="F:transition metal ion binding"/>
    <property type="evidence" value="ECO:0007669"/>
    <property type="project" value="InterPro"/>
</dbReference>
<dbReference type="GO" id="GO:0008344">
    <property type="term" value="P:adult locomotory behavior"/>
    <property type="evidence" value="ECO:0000315"/>
    <property type="project" value="MGI"/>
</dbReference>
<dbReference type="GO" id="GO:0008088">
    <property type="term" value="P:axo-dendritic transport"/>
    <property type="evidence" value="ECO:0000315"/>
    <property type="project" value="MGI"/>
</dbReference>
<dbReference type="GO" id="GO:0016199">
    <property type="term" value="P:axon midline choice point recognition"/>
    <property type="evidence" value="ECO:0000315"/>
    <property type="project" value="MGI"/>
</dbReference>
<dbReference type="GO" id="GO:0007409">
    <property type="term" value="P:axonogenesis"/>
    <property type="evidence" value="ECO:0000315"/>
    <property type="project" value="MGI"/>
</dbReference>
<dbReference type="GO" id="GO:0007155">
    <property type="term" value="P:cell adhesion"/>
    <property type="evidence" value="ECO:0007669"/>
    <property type="project" value="UniProtKB-KW"/>
</dbReference>
<dbReference type="GO" id="GO:0021953">
    <property type="term" value="P:central nervous system neuron differentiation"/>
    <property type="evidence" value="ECO:0000316"/>
    <property type="project" value="MGI"/>
</dbReference>
<dbReference type="GO" id="GO:0008203">
    <property type="term" value="P:cholesterol metabolic process"/>
    <property type="evidence" value="ECO:0000315"/>
    <property type="project" value="MGI"/>
</dbReference>
<dbReference type="GO" id="GO:0050890">
    <property type="term" value="P:cognition"/>
    <property type="evidence" value="ECO:0000314"/>
    <property type="project" value="MGI"/>
</dbReference>
<dbReference type="GO" id="GO:0048669">
    <property type="term" value="P:collateral sprouting in absence of injury"/>
    <property type="evidence" value="ECO:0000316"/>
    <property type="project" value="MGI"/>
</dbReference>
<dbReference type="GO" id="GO:0180011">
    <property type="term" value="P:cytosolic mRNA polyadenylation"/>
    <property type="evidence" value="ECO:0000314"/>
    <property type="project" value="MGI"/>
</dbReference>
<dbReference type="GO" id="GO:0016358">
    <property type="term" value="P:dendrite development"/>
    <property type="evidence" value="ECO:0000315"/>
    <property type="project" value="MGI"/>
</dbReference>
<dbReference type="GO" id="GO:0006897">
    <property type="term" value="P:endocytosis"/>
    <property type="evidence" value="ECO:0000315"/>
    <property type="project" value="MGI"/>
</dbReference>
<dbReference type="GO" id="GO:0030198">
    <property type="term" value="P:extracellular matrix organization"/>
    <property type="evidence" value="ECO:0000316"/>
    <property type="project" value="MGI"/>
</dbReference>
<dbReference type="GO" id="GO:0030900">
    <property type="term" value="P:forebrain development"/>
    <property type="evidence" value="ECO:0000315"/>
    <property type="project" value="MGI"/>
</dbReference>
<dbReference type="GO" id="GO:0000086">
    <property type="term" value="P:G2/M transition of mitotic cell cycle"/>
    <property type="evidence" value="ECO:0000315"/>
    <property type="project" value="MGI"/>
</dbReference>
<dbReference type="GO" id="GO:0010467">
    <property type="term" value="P:gene expression"/>
    <property type="evidence" value="ECO:0000315"/>
    <property type="project" value="MGI"/>
</dbReference>
<dbReference type="GO" id="GO:0006878">
    <property type="term" value="P:intracellular copper ion homeostasis"/>
    <property type="evidence" value="ECO:0000315"/>
    <property type="project" value="MGI"/>
</dbReference>
<dbReference type="GO" id="GO:0035235">
    <property type="term" value="P:ionotropic glutamate receptor signaling pathway"/>
    <property type="evidence" value="ECO:0000315"/>
    <property type="project" value="MGI"/>
</dbReference>
<dbReference type="GO" id="GO:0007626">
    <property type="term" value="P:locomotory behavior"/>
    <property type="evidence" value="ECO:0000316"/>
    <property type="project" value="MGI"/>
</dbReference>
<dbReference type="GO" id="GO:0060291">
    <property type="term" value="P:long-term synaptic potentiation"/>
    <property type="evidence" value="ECO:0000304"/>
    <property type="project" value="ARUK-UCL"/>
</dbReference>
<dbReference type="GO" id="GO:0007617">
    <property type="term" value="P:mating behavior"/>
    <property type="evidence" value="ECO:0000316"/>
    <property type="project" value="MGI"/>
</dbReference>
<dbReference type="GO" id="GO:0007613">
    <property type="term" value="P:memory"/>
    <property type="evidence" value="ECO:0000304"/>
    <property type="project" value="ARUK-UCL"/>
</dbReference>
<dbReference type="GO" id="GO:0000278">
    <property type="term" value="P:mitotic cell cycle"/>
    <property type="evidence" value="ECO:0000315"/>
    <property type="project" value="MGI"/>
</dbReference>
<dbReference type="GO" id="GO:0045665">
    <property type="term" value="P:negative regulation of neuron differentiation"/>
    <property type="evidence" value="ECO:0000314"/>
    <property type="project" value="MGI"/>
</dbReference>
<dbReference type="GO" id="GO:1905607">
    <property type="term" value="P:negative regulation of presynapse assembly"/>
    <property type="evidence" value="ECO:0000315"/>
    <property type="project" value="MGI"/>
</dbReference>
<dbReference type="GO" id="GO:0050885">
    <property type="term" value="P:neuromuscular process controlling balance"/>
    <property type="evidence" value="ECO:0000316"/>
    <property type="project" value="MGI"/>
</dbReference>
<dbReference type="GO" id="GO:0051402">
    <property type="term" value="P:neuron apoptotic process"/>
    <property type="evidence" value="ECO:0000316"/>
    <property type="project" value="MGI"/>
</dbReference>
<dbReference type="GO" id="GO:0070050">
    <property type="term" value="P:neuron cellular homeostasis"/>
    <property type="evidence" value="ECO:0000316"/>
    <property type="project" value="MGI"/>
</dbReference>
<dbReference type="GO" id="GO:0030182">
    <property type="term" value="P:neuron differentiation"/>
    <property type="evidence" value="ECO:0000314"/>
    <property type="project" value="MGI"/>
</dbReference>
<dbReference type="GO" id="GO:0031175">
    <property type="term" value="P:neuron projection development"/>
    <property type="evidence" value="ECO:0000314"/>
    <property type="project" value="MGI"/>
</dbReference>
<dbReference type="GO" id="GO:0016322">
    <property type="term" value="P:neuron remodeling"/>
    <property type="evidence" value="ECO:0000315"/>
    <property type="project" value="MGI"/>
</dbReference>
<dbReference type="GO" id="GO:0007219">
    <property type="term" value="P:Notch signaling pathway"/>
    <property type="evidence" value="ECO:0007669"/>
    <property type="project" value="UniProtKB-KW"/>
</dbReference>
<dbReference type="GO" id="GO:0010971">
    <property type="term" value="P:positive regulation of G2/M transition of mitotic cell cycle"/>
    <property type="evidence" value="ECO:0000315"/>
    <property type="project" value="MGI"/>
</dbReference>
<dbReference type="GO" id="GO:0045931">
    <property type="term" value="P:positive regulation of mitotic cell cycle"/>
    <property type="evidence" value="ECO:0000315"/>
    <property type="project" value="MGI"/>
</dbReference>
<dbReference type="GO" id="GO:0045944">
    <property type="term" value="P:positive regulation of transcription by RNA polymerase II"/>
    <property type="evidence" value="ECO:0000314"/>
    <property type="project" value="MGI"/>
</dbReference>
<dbReference type="GO" id="GO:0010468">
    <property type="term" value="P:regulation of gene expression"/>
    <property type="evidence" value="ECO:0000314"/>
    <property type="project" value="MGI"/>
</dbReference>
<dbReference type="GO" id="GO:0040014">
    <property type="term" value="P:regulation of multicellular organism growth"/>
    <property type="evidence" value="ECO:0000315"/>
    <property type="project" value="MGI"/>
</dbReference>
<dbReference type="GO" id="GO:0050803">
    <property type="term" value="P:regulation of synapse structure or activity"/>
    <property type="evidence" value="ECO:0000315"/>
    <property type="project" value="MGI"/>
</dbReference>
<dbReference type="GO" id="GO:0006417">
    <property type="term" value="P:regulation of translation"/>
    <property type="evidence" value="ECO:0000314"/>
    <property type="project" value="MGI"/>
</dbReference>
<dbReference type="GO" id="GO:0006979">
    <property type="term" value="P:response to oxidative stress"/>
    <property type="evidence" value="ECO:0000316"/>
    <property type="project" value="MGI"/>
</dbReference>
<dbReference type="GO" id="GO:0051563">
    <property type="term" value="P:smooth endoplasmic reticulum calcium ion homeostasis"/>
    <property type="evidence" value="ECO:0000316"/>
    <property type="project" value="MGI"/>
</dbReference>
<dbReference type="GO" id="GO:0001967">
    <property type="term" value="P:suckling behavior"/>
    <property type="evidence" value="ECO:0000316"/>
    <property type="project" value="MGI"/>
</dbReference>
<dbReference type="GO" id="GO:0051124">
    <property type="term" value="P:synaptic assembly at neuromuscular junction"/>
    <property type="evidence" value="ECO:0000316"/>
    <property type="project" value="MGI"/>
</dbReference>
<dbReference type="GO" id="GO:0008542">
    <property type="term" value="P:visual learning"/>
    <property type="evidence" value="ECO:0000315"/>
    <property type="project" value="MGI"/>
</dbReference>
<dbReference type="CDD" id="cd22607">
    <property type="entry name" value="Kunitz_ABPP-like"/>
    <property type="match status" value="1"/>
</dbReference>
<dbReference type="FunFam" id="3.30.1490.140:FF:000001">
    <property type="entry name" value="Amyloid beta (A4) protein b"/>
    <property type="match status" value="1"/>
</dbReference>
<dbReference type="FunFam" id="3.90.570.10:FF:000001">
    <property type="entry name" value="Amyloid beta A4 protein"/>
    <property type="match status" value="1"/>
</dbReference>
<dbReference type="FunFam" id="4.10.410.10:FF:000001">
    <property type="entry name" value="Amyloid beta A4 protein"/>
    <property type="match status" value="1"/>
</dbReference>
<dbReference type="FunFam" id="1.20.120.770:FF:000001">
    <property type="entry name" value="Amyloid beta A4 protein-like isoform 1"/>
    <property type="match status" value="1"/>
</dbReference>
<dbReference type="Gene3D" id="6.10.250.1670">
    <property type="match status" value="1"/>
</dbReference>
<dbReference type="Gene3D" id="1.20.120.770">
    <property type="entry name" value="Amyloid precursor protein, E2 domain"/>
    <property type="match status" value="1"/>
</dbReference>
<dbReference type="Gene3D" id="3.30.1490.140">
    <property type="entry name" value="Amyloidogenic glycoprotein, copper-binding domain"/>
    <property type="match status" value="1"/>
</dbReference>
<dbReference type="Gene3D" id="3.90.570.10">
    <property type="entry name" value="Amyloidogenic glycoprotein, heparin-binding domain"/>
    <property type="match status" value="1"/>
</dbReference>
<dbReference type="Gene3D" id="4.10.410.10">
    <property type="entry name" value="Pancreatic trypsin inhibitor Kunitz domain"/>
    <property type="match status" value="1"/>
</dbReference>
<dbReference type="Gene3D" id="2.30.29.30">
    <property type="entry name" value="Pleckstrin-homology domain (PH domain)/Phosphotyrosine-binding domain (PTB)"/>
    <property type="match status" value="1"/>
</dbReference>
<dbReference type="InterPro" id="IPR036669">
    <property type="entry name" value="Amyloid_Cu-bd_sf"/>
</dbReference>
<dbReference type="InterPro" id="IPR008155">
    <property type="entry name" value="Amyloid_glyco"/>
</dbReference>
<dbReference type="InterPro" id="IPR013803">
    <property type="entry name" value="Amyloid_glyco_Abeta"/>
</dbReference>
<dbReference type="InterPro" id="IPR011178">
    <property type="entry name" value="Amyloid_glyco_Cu-bd"/>
</dbReference>
<dbReference type="InterPro" id="IPR024329">
    <property type="entry name" value="Amyloid_glyco_E2_domain"/>
</dbReference>
<dbReference type="InterPro" id="IPR008154">
    <property type="entry name" value="Amyloid_glyco_extra"/>
</dbReference>
<dbReference type="InterPro" id="IPR015849">
    <property type="entry name" value="Amyloid_glyco_heparin-bd"/>
</dbReference>
<dbReference type="InterPro" id="IPR036454">
    <property type="entry name" value="Amyloid_glyco_heparin-bd_sf"/>
</dbReference>
<dbReference type="InterPro" id="IPR019745">
    <property type="entry name" value="Amyloid_glyco_intracell_CS"/>
</dbReference>
<dbReference type="InterPro" id="IPR019543">
    <property type="entry name" value="APP_amyloid_C"/>
</dbReference>
<dbReference type="InterPro" id="IPR019744">
    <property type="entry name" value="APP_CUBD_CS"/>
</dbReference>
<dbReference type="InterPro" id="IPR036176">
    <property type="entry name" value="E2_sf"/>
</dbReference>
<dbReference type="InterPro" id="IPR002223">
    <property type="entry name" value="Kunitz_BPTI"/>
</dbReference>
<dbReference type="InterPro" id="IPR036880">
    <property type="entry name" value="Kunitz_BPTI_sf"/>
</dbReference>
<dbReference type="InterPro" id="IPR011993">
    <property type="entry name" value="PH-like_dom_sf"/>
</dbReference>
<dbReference type="InterPro" id="IPR020901">
    <property type="entry name" value="Prtase_inh_Kunz-CS"/>
</dbReference>
<dbReference type="PANTHER" id="PTHR23103">
    <property type="entry name" value="ALZHEIMER'S DISEASE BETA-AMYLOID RELATED"/>
    <property type="match status" value="1"/>
</dbReference>
<dbReference type="PANTHER" id="PTHR23103:SF7">
    <property type="entry name" value="AMYLOID-BETA PRECURSOR PROTEIN"/>
    <property type="match status" value="1"/>
</dbReference>
<dbReference type="Pfam" id="PF10515">
    <property type="entry name" value="APP_amyloid"/>
    <property type="match status" value="1"/>
</dbReference>
<dbReference type="Pfam" id="PF12924">
    <property type="entry name" value="APP_Cu_bd"/>
    <property type="match status" value="1"/>
</dbReference>
<dbReference type="Pfam" id="PF12925">
    <property type="entry name" value="APP_E2"/>
    <property type="match status" value="1"/>
</dbReference>
<dbReference type="Pfam" id="PF02177">
    <property type="entry name" value="APP_N"/>
    <property type="match status" value="1"/>
</dbReference>
<dbReference type="Pfam" id="PF03494">
    <property type="entry name" value="Beta-APP"/>
    <property type="match status" value="1"/>
</dbReference>
<dbReference type="Pfam" id="PF00014">
    <property type="entry name" value="Kunitz_BPTI"/>
    <property type="match status" value="1"/>
</dbReference>
<dbReference type="PRINTS" id="PR00203">
    <property type="entry name" value="AMYLOIDA4"/>
</dbReference>
<dbReference type="PRINTS" id="PR00759">
    <property type="entry name" value="BASICPTASE"/>
</dbReference>
<dbReference type="PRINTS" id="PR00204">
    <property type="entry name" value="BETAAMYLOID"/>
</dbReference>
<dbReference type="SMART" id="SM00006">
    <property type="entry name" value="A4_EXTRA"/>
    <property type="match status" value="1"/>
</dbReference>
<dbReference type="SMART" id="SM00131">
    <property type="entry name" value="KU"/>
    <property type="match status" value="1"/>
</dbReference>
<dbReference type="SUPFAM" id="SSF56491">
    <property type="entry name" value="A heparin-binding domain"/>
    <property type="match status" value="1"/>
</dbReference>
<dbReference type="SUPFAM" id="SSF89811">
    <property type="entry name" value="Amyloid beta a4 protein copper binding domain (domain 2)"/>
    <property type="match status" value="1"/>
</dbReference>
<dbReference type="SUPFAM" id="SSF57362">
    <property type="entry name" value="BPTI-like"/>
    <property type="match status" value="1"/>
</dbReference>
<dbReference type="SUPFAM" id="SSF109843">
    <property type="entry name" value="CAPPD, an extracellular domain of amyloid beta A4 protein"/>
    <property type="match status" value="1"/>
</dbReference>
<dbReference type="PROSITE" id="PS00319">
    <property type="entry name" value="APP_CUBD"/>
    <property type="match status" value="1"/>
</dbReference>
<dbReference type="PROSITE" id="PS51869">
    <property type="entry name" value="APP_E1"/>
    <property type="match status" value="1"/>
</dbReference>
<dbReference type="PROSITE" id="PS51870">
    <property type="entry name" value="APP_E2"/>
    <property type="match status" value="1"/>
</dbReference>
<dbReference type="PROSITE" id="PS00320">
    <property type="entry name" value="APP_INTRA"/>
    <property type="match status" value="1"/>
</dbReference>
<dbReference type="PROSITE" id="PS00280">
    <property type="entry name" value="BPTI_KUNITZ_1"/>
    <property type="match status" value="1"/>
</dbReference>
<dbReference type="PROSITE" id="PS50279">
    <property type="entry name" value="BPTI_KUNITZ_2"/>
    <property type="match status" value="1"/>
</dbReference>
<protein>
    <recommendedName>
        <fullName evidence="2">Amyloid-beta precursor protein</fullName>
    </recommendedName>
    <alternativeName>
        <fullName>ABPP</fullName>
        <shortName>APP</shortName>
    </alternativeName>
    <alternativeName>
        <fullName>Alzheimer disease amyloid A4 protein homolog</fullName>
    </alternativeName>
    <alternativeName>
        <fullName>Alzheimer disease amyloid protein</fullName>
    </alternativeName>
    <alternativeName>
        <fullName evidence="30">Amyloid precursor protein</fullName>
    </alternativeName>
    <alternativeName>
        <fullName evidence="31">Amyloid-beta (A4) precursor protein</fullName>
    </alternativeName>
    <alternativeName>
        <fullName evidence="3">Amyloid-beta A4 protein</fullName>
    </alternativeName>
    <alternativeName>
        <fullName>Amyloidogenic glycoprotein</fullName>
        <shortName>AG</shortName>
    </alternativeName>
    <component>
        <recommendedName>
            <fullName>N-APP</fullName>
        </recommendedName>
    </component>
    <component>
        <recommendedName>
            <fullName>Soluble APP-alpha</fullName>
            <shortName>S-APP-alpha</shortName>
        </recommendedName>
    </component>
    <component>
        <recommendedName>
            <fullName>Soluble APP-beta</fullName>
            <shortName>S-APP-beta</shortName>
        </recommendedName>
    </component>
    <component>
        <recommendedName>
            <fullName>C99</fullName>
        </recommendedName>
        <alternativeName>
            <fullName>APP-C99</fullName>
        </alternativeName>
        <alternativeName>
            <fullName>Beta-secretase C-terminal fragment</fullName>
            <shortName>Beta-CTF</shortName>
        </alternativeName>
    </component>
    <component>
        <recommendedName>
            <fullName>Amyloid-beta protein 42</fullName>
            <shortName>Abeta42</shortName>
        </recommendedName>
        <alternativeName>
            <fullName>Beta-APP42</fullName>
        </alternativeName>
    </component>
    <component>
        <recommendedName>
            <fullName>Amyloid-beta protein 40</fullName>
            <shortName>Abeta40</shortName>
        </recommendedName>
        <alternativeName>
            <fullName>Beta-APP40</fullName>
        </alternativeName>
    </component>
    <component>
        <recommendedName>
            <fullName>C83</fullName>
        </recommendedName>
        <alternativeName>
            <fullName>Alpha-secretase C-terminal fragment</fullName>
            <shortName>Alpha-CTF</shortName>
        </alternativeName>
    </component>
    <component>
        <recommendedName>
            <fullName>P3(42)</fullName>
        </recommendedName>
    </component>
    <component>
        <recommendedName>
            <fullName>P3(40)</fullName>
        </recommendedName>
    </component>
    <component>
        <recommendedName>
            <fullName>C80</fullName>
        </recommendedName>
    </component>
    <component>
        <recommendedName>
            <fullName>Gamma-secretase C-terminal fragment 59</fullName>
        </recommendedName>
        <alternativeName>
            <fullName>APP-C59</fullName>
        </alternativeName>
        <alternativeName>
            <fullName>Amyloid intracellular domain 59</fullName>
            <shortName>AID(59)</shortName>
        </alternativeName>
        <alternativeName>
            <fullName>Gamma-CTF(59)</fullName>
        </alternativeName>
    </component>
    <component>
        <recommendedName>
            <fullName>Gamma-secretase C-terminal fragment 57</fullName>
        </recommendedName>
        <alternativeName>
            <fullName>APP-C57</fullName>
        </alternativeName>
        <alternativeName>
            <fullName>Amyloid intracellular domain 57</fullName>
            <shortName>AID(57)</shortName>
        </alternativeName>
        <alternativeName>
            <fullName>Gamma-CTF(57)</fullName>
        </alternativeName>
    </component>
    <component>
        <recommendedName>
            <fullName>Gamma-secretase C-terminal fragment 50</fullName>
        </recommendedName>
        <alternativeName>
            <fullName>Amyloid intracellular domain 50</fullName>
            <shortName>AID(50)</shortName>
        </alternativeName>
        <alternativeName>
            <fullName>Gamma-CTF(50)</fullName>
        </alternativeName>
    </component>
    <component>
        <recommendedName>
            <fullName>C31</fullName>
        </recommendedName>
    </component>
</protein>
<sequence length="770" mass="86722">MLPSLALLLLAAWTVRALEVPTDGNAGLLAEPQIAMFCGKLNMHMNVQNGKWESDPSGTKTCIGTKEGILQYCQEVYPELQITNVVEANQPVTIQNWCKRGRKQCKTHTHIVIPYRCLVGEFVSDALLVPDKCKFLHQERMDVCETHLHWHTVAKETCSEKSTNLHDYGMLLPCGIDKFRGVEFVCCPLAEESDSVDSADAEEDDSDVWWGGADTDYADGGEDKVVEVAEEEEVADVEEEEADDDEDVEDGDEVEEEAEEPYEEATERTTSTATTTTTTTESVEEVVREVCSEQAETGPCRAMISRWYFDVTEGKCVPFFYGGCGGNRNNFDTEEYCMAVCGSVSTQSLLKTTSEPLPQDPDKLPTTAASTPDAVDKYLETPGDENEHAHFQKAKERLEAKHRERMSQVMREWEEAERQAKNLPKADKKAVIQHFQEKVESLEQEAANERQQLVETHMARVEAMLNDRRRLALENYITALQAVPPRPHHVFNMLKKYVRAEQKDRQHTLKHFEHVRMVDPKKAAQIRSQVMTHLRVIYERMNQSLSLLYNVPAVAEEIQDEVDELLQKEQNYSDDVLANMISEPRISYGNDALMPSLTETKTTVELLPVNGEFSLDDLQPWHPFGVDSVPANTENEVEPVDARPAADRGLTTRPGSGLTNIKTEEISEVKMDAEFGHDSGFEVRHQKLVFFAEDVGSNKGAIIGLMVGGVVIATVIVITLVMLKKKQYTSIHHGVVEVDAAVTPEERHLSKMQQNGYENPTYKFFEQMQN</sequence>
<feature type="signal peptide" evidence="2">
    <location>
        <begin position="1"/>
        <end position="17"/>
    </location>
</feature>
<feature type="chain" id="PRO_0000000114" description="Amyloid-beta precursor protein">
    <location>
        <begin position="18"/>
        <end position="770"/>
    </location>
</feature>
<feature type="chain" id="PRO_0000000115" description="Soluble APP-alpha" evidence="4">
    <location>
        <begin position="18"/>
        <end position="687"/>
    </location>
</feature>
<feature type="chain" id="PRO_0000000116" description="Soluble APP-beta" evidence="4">
    <location>
        <begin position="18"/>
        <end position="671"/>
    </location>
</feature>
<feature type="chain" id="PRO_0000381968" description="N-APP" evidence="1">
    <location>
        <begin position="18"/>
        <end position="286"/>
    </location>
</feature>
<feature type="chain" id="PRO_0000000117" description="C99" evidence="1">
    <location>
        <begin position="672"/>
        <end position="770"/>
    </location>
</feature>
<feature type="chain" id="PRO_0000000118" description="Amyloid-beta protein 42" evidence="2">
    <location>
        <begin position="672"/>
        <end position="713"/>
    </location>
</feature>
<feature type="chain" id="PRO_0000000119" description="Amyloid-beta protein 40" evidence="2">
    <location>
        <begin position="672"/>
        <end position="711"/>
    </location>
</feature>
<feature type="chain" id="PRO_0000000120" description="C83" evidence="1">
    <location>
        <begin position="688"/>
        <end position="770"/>
    </location>
</feature>
<feature type="peptide" id="PRO_0000000121" description="P3(42)" evidence="1">
    <location>
        <begin position="688"/>
        <end position="713"/>
    </location>
</feature>
<feature type="peptide" id="PRO_0000000122" description="P3(40)" evidence="1">
    <location>
        <begin position="688"/>
        <end position="711"/>
    </location>
</feature>
<feature type="chain" id="PRO_0000384576" description="C80">
    <location>
        <begin position="691"/>
        <end position="770"/>
    </location>
</feature>
<feature type="chain" id="PRO_0000000123" description="Gamma-secretase C-terminal fragment 59">
    <location>
        <begin position="712"/>
        <end position="770"/>
    </location>
</feature>
<feature type="chain" id="PRO_0000000124" description="Gamma-secretase C-terminal fragment 57">
    <location>
        <begin position="714"/>
        <end position="770"/>
    </location>
</feature>
<feature type="chain" id="PRO_0000000125" description="Gamma-secretase C-terminal fragment 50">
    <location>
        <begin position="721"/>
        <end position="770"/>
    </location>
</feature>
<feature type="chain" id="PRO_0000000126" description="C31" evidence="1">
    <location>
        <begin position="740"/>
        <end position="770"/>
    </location>
</feature>
<feature type="topological domain" description="Extracellular" evidence="30">
    <location>
        <begin position="18"/>
        <end position="701"/>
    </location>
</feature>
<feature type="transmembrane region" description="Helical" evidence="2">
    <location>
        <begin position="702"/>
        <end position="722"/>
    </location>
</feature>
<feature type="topological domain" description="Cytoplasmic" evidence="30">
    <location>
        <begin position="723"/>
        <end position="770"/>
    </location>
</feature>
<feature type="domain" description="E1" evidence="6">
    <location>
        <begin position="28"/>
        <end position="189"/>
    </location>
</feature>
<feature type="domain" description="BPTI/Kunitz inhibitor" evidence="5">
    <location>
        <begin position="291"/>
        <end position="341"/>
    </location>
</feature>
<feature type="domain" description="E2" evidence="7">
    <location>
        <begin position="374"/>
        <end position="565"/>
    </location>
</feature>
<feature type="region of interest" description="GFLD subdomain" evidence="6">
    <location>
        <begin position="28"/>
        <end position="123"/>
    </location>
</feature>
<feature type="region of interest" description="CuBD subdomain" evidence="6">
    <location>
        <begin position="131"/>
        <end position="189"/>
    </location>
</feature>
<feature type="region of interest" description="Zinc-binding" evidence="1">
    <location>
        <begin position="181"/>
        <end position="188"/>
    </location>
</feature>
<feature type="region of interest" description="Disordered" evidence="8">
    <location>
        <begin position="193"/>
        <end position="284"/>
    </location>
</feature>
<feature type="region of interest" description="Heparin-binding" evidence="1">
    <location>
        <begin position="391"/>
        <end position="423"/>
    </location>
</feature>
<feature type="region of interest" description="Heparin-binding" evidence="1">
    <location>
        <begin position="491"/>
        <end position="522"/>
    </location>
</feature>
<feature type="region of interest" description="Collagen-binding" evidence="2">
    <location>
        <begin position="523"/>
        <end position="540"/>
    </location>
</feature>
<feature type="region of interest" description="Interaction with PSEN1" evidence="2">
    <location>
        <begin position="695"/>
        <end position="722"/>
    </location>
</feature>
<feature type="region of interest" description="Interaction with G(o)-alpha" evidence="1">
    <location>
        <begin position="732"/>
        <end position="751"/>
    </location>
</feature>
<feature type="region of interest" description="Interaction with DAB2" evidence="9">
    <location>
        <begin position="756"/>
        <end position="770"/>
    </location>
</feature>
<feature type="region of interest" description="Required for the interaction with KIF5B and for anterograde transport in axons" evidence="2">
    <location>
        <begin position="756"/>
        <end position="770"/>
    </location>
</feature>
<feature type="short sequence motif" description="OX-2" evidence="2">
    <location>
        <begin position="344"/>
        <end position="365"/>
    </location>
</feature>
<feature type="short sequence motif" description="Basolateral sorting signal">
    <location>
        <begin position="724"/>
        <end position="734"/>
    </location>
</feature>
<feature type="short sequence motif" description="YENPXY motif; contains endocytosis signal" evidence="2">
    <location>
        <begin position="757"/>
        <end position="762"/>
    </location>
</feature>
<feature type="compositionally biased region" description="Acidic residues" evidence="8">
    <location>
        <begin position="193"/>
        <end position="207"/>
    </location>
</feature>
<feature type="compositionally biased region" description="Acidic residues" evidence="8">
    <location>
        <begin position="228"/>
        <end position="264"/>
    </location>
</feature>
<feature type="compositionally biased region" description="Low complexity" evidence="8">
    <location>
        <begin position="268"/>
        <end position="281"/>
    </location>
</feature>
<feature type="binding site" evidence="2">
    <location>
        <begin position="96"/>
        <end position="110"/>
    </location>
    <ligand>
        <name>heparin</name>
        <dbReference type="ChEBI" id="CHEBI:28304"/>
    </ligand>
</feature>
<feature type="binding site" evidence="6">
    <location>
        <position position="147"/>
    </location>
    <ligand>
        <name>Cu(2+)</name>
        <dbReference type="ChEBI" id="CHEBI:29036"/>
        <label>1</label>
    </ligand>
</feature>
<feature type="binding site" evidence="6">
    <location>
        <position position="151"/>
    </location>
    <ligand>
        <name>Cu(2+)</name>
        <dbReference type="ChEBI" id="CHEBI:29036"/>
        <label>1</label>
    </ligand>
</feature>
<feature type="binding site" evidence="6">
    <location>
        <position position="168"/>
    </location>
    <ligand>
        <name>Cu(2+)</name>
        <dbReference type="ChEBI" id="CHEBI:29036"/>
        <label>1</label>
    </ligand>
</feature>
<feature type="binding site" evidence="2">
    <location>
        <position position="183"/>
    </location>
    <ligand>
        <name>Zn(2+)</name>
        <dbReference type="ChEBI" id="CHEBI:29105"/>
        <label>1</label>
    </ligand>
</feature>
<feature type="binding site" evidence="2">
    <location>
        <position position="186"/>
    </location>
    <ligand>
        <name>Zn(2+)</name>
        <dbReference type="ChEBI" id="CHEBI:29105"/>
        <label>1</label>
    </ligand>
</feature>
<feature type="binding site" evidence="2">
    <location>
        <position position="187"/>
    </location>
    <ligand>
        <name>Zn(2+)</name>
        <dbReference type="ChEBI" id="CHEBI:29105"/>
        <label>1</label>
    </ligand>
</feature>
<feature type="binding site" evidence="2">
    <location>
        <position position="677"/>
    </location>
    <ligand>
        <name>Cu(2+)</name>
        <dbReference type="ChEBI" id="CHEBI:29036"/>
        <label>2</label>
    </ligand>
</feature>
<feature type="binding site" evidence="2">
    <location>
        <position position="677"/>
    </location>
    <ligand>
        <name>Zn(2+)</name>
        <dbReference type="ChEBI" id="CHEBI:29105"/>
        <label>2</label>
    </ligand>
</feature>
<feature type="binding site" evidence="2">
    <location>
        <position position="685"/>
    </location>
    <ligand>
        <name>Cu(2+)</name>
        <dbReference type="ChEBI" id="CHEBI:29036"/>
        <label>2</label>
    </ligand>
</feature>
<feature type="binding site" evidence="2">
    <location>
        <position position="685"/>
    </location>
    <ligand>
        <name>Zn(2+)</name>
        <dbReference type="ChEBI" id="CHEBI:29105"/>
        <label>2</label>
    </ligand>
</feature>
<feature type="site" description="Required for Cu(2+) reduction" evidence="6">
    <location>
        <position position="170"/>
    </location>
</feature>
<feature type="site" description="Cleavage; by caspases" evidence="2">
    <location>
        <begin position="197"/>
        <end position="198"/>
    </location>
</feature>
<feature type="site" description="Cleavage; by caspases" evidence="2">
    <location>
        <begin position="219"/>
        <end position="220"/>
    </location>
</feature>
<feature type="site" description="Reactive bond" evidence="1">
    <location>
        <begin position="301"/>
        <end position="302"/>
    </location>
</feature>
<feature type="site" description="Cleavage; by beta-secretase" evidence="2">
    <location>
        <begin position="671"/>
        <end position="672"/>
    </location>
</feature>
<feature type="site" description="Cleavage; by ACE" evidence="2">
    <location>
        <begin position="678"/>
        <end position="679"/>
    </location>
</feature>
<feature type="site" description="Cleavage; by alpha-secretase" evidence="3">
    <location>
        <begin position="687"/>
        <end position="688"/>
    </location>
</feature>
<feature type="site" description="Cleavage; by theta-secretase" evidence="3">
    <location>
        <begin position="690"/>
        <end position="691"/>
    </location>
</feature>
<feature type="site" description="Implicated in free radical propagation" evidence="1">
    <location>
        <position position="704"/>
    </location>
</feature>
<feature type="site" description="Susceptible to oxidation" evidence="2">
    <location>
        <position position="706"/>
    </location>
</feature>
<feature type="site" description="Cleavage; by gamma-secretase; site 1" evidence="3">
    <location>
        <begin position="711"/>
        <end position="712"/>
    </location>
</feature>
<feature type="site" description="Cleavage; by gamma-secretase; site 2" evidence="2">
    <location>
        <begin position="713"/>
        <end position="714"/>
    </location>
</feature>
<feature type="site" description="Cleavage; by gamma-secretase; site 3" evidence="2">
    <location>
        <begin position="720"/>
        <end position="721"/>
    </location>
</feature>
<feature type="site" description="Cleavage; by a caspase" evidence="2">
    <location>
        <begin position="739"/>
        <end position="740"/>
    </location>
</feature>
<feature type="modified residue" description="Phosphoserine; by CK2" evidence="2">
    <location>
        <position position="198"/>
    </location>
</feature>
<feature type="modified residue" description="Phosphoserine; by CK1" evidence="2">
    <location>
        <position position="206"/>
    </location>
</feature>
<feature type="modified residue" description="Sulfotyrosine" evidence="4">
    <location>
        <position position="217"/>
    </location>
</feature>
<feature type="modified residue" description="Sulfotyrosine" evidence="4">
    <location>
        <position position="262"/>
    </location>
</feature>
<feature type="modified residue" description="Sulfotyrosine" evidence="4">
    <location>
        <position position="336"/>
    </location>
</feature>
<feature type="modified residue" description="Phosphoserine" evidence="34">
    <location>
        <position position="441"/>
    </location>
</feature>
<feature type="modified residue" description="Phosphotyrosine" evidence="2">
    <location>
        <position position="497"/>
    </location>
</feature>
<feature type="modified residue" description="Phosphothreonine" evidence="3">
    <location>
        <position position="729"/>
    </location>
</feature>
<feature type="modified residue" description="Phosphoserine; by APP-kinase I" evidence="3">
    <location>
        <position position="730"/>
    </location>
</feature>
<feature type="modified residue" description="Phosphothreonine; by CDK5 and MAPK10 and LRRK2" evidence="24">
    <location>
        <position position="743"/>
    </location>
</feature>
<feature type="modified residue" description="Phosphotyrosine; by ABL1" evidence="10">
    <location>
        <position position="757"/>
    </location>
</feature>
<feature type="glycosylation site" description="N-linked (GlcNAc...) asparagine" evidence="33">
    <location>
        <position position="542"/>
    </location>
</feature>
<feature type="glycosylation site" description="N-linked (GlcNAc...) asparagine" evidence="30">
    <location>
        <position position="571"/>
    </location>
</feature>
<feature type="disulfide bond" evidence="6">
    <location>
        <begin position="38"/>
        <end position="62"/>
    </location>
</feature>
<feature type="disulfide bond" evidence="6">
    <location>
        <begin position="73"/>
        <end position="117"/>
    </location>
</feature>
<feature type="disulfide bond" evidence="6">
    <location>
        <begin position="98"/>
        <end position="105"/>
    </location>
</feature>
<feature type="disulfide bond" evidence="6">
    <location>
        <begin position="133"/>
        <end position="187"/>
    </location>
</feature>
<feature type="disulfide bond" evidence="6">
    <location>
        <begin position="144"/>
        <end position="174"/>
    </location>
</feature>
<feature type="disulfide bond" evidence="6">
    <location>
        <begin position="158"/>
        <end position="186"/>
    </location>
</feature>
<feature type="disulfide bond" evidence="5">
    <location>
        <begin position="291"/>
        <end position="341"/>
    </location>
</feature>
<feature type="disulfide bond" evidence="5">
    <location>
        <begin position="300"/>
        <end position="324"/>
    </location>
</feature>
<feature type="disulfide bond" evidence="5">
    <location>
        <begin position="316"/>
        <end position="337"/>
    </location>
</feature>
<feature type="cross-link" description="Glycyl lysine isopeptide (Lys-Gly) (interchain with G-Cter in ubiquitin)" evidence="3">
    <location>
        <position position="763"/>
    </location>
</feature>
<feature type="splice variant" id="VSP_000012" description="In isoform APP695." evidence="27 28 29">
    <original>E</original>
    <variation>V</variation>
    <location>
        <position position="289"/>
    </location>
</feature>
<feature type="splice variant" id="VSP_000013" description="In isoform APP695." evidence="27 28 29">
    <location>
        <begin position="290"/>
        <end position="364"/>
    </location>
</feature>
<feature type="splice variant" id="VSP_000014" description="In isoform APP751." evidence="30">
    <location>
        <begin position="346"/>
        <end position="380"/>
    </location>
</feature>
<feature type="mutagenesis site" description="No effect on MAPK8IP1 binding." evidence="11">
    <original>Y</original>
    <variation>A</variation>
    <location>
        <position position="728"/>
    </location>
</feature>
<feature type="mutagenesis site" description="Almost complete loss of binding to G(o) alpha subunit. No inhibition of GTPase activity.">
    <original>HH</original>
    <variation>GL</variation>
    <variation>GP</variation>
    <location>
        <begin position="732"/>
        <end position="733"/>
    </location>
</feature>
<feature type="mutagenesis site" description="No effect on MAPK8IP1 binding." evidence="11">
    <original>T</original>
    <variation>E</variation>
    <location>
        <position position="743"/>
    </location>
</feature>
<feature type="mutagenesis site" description="Greatly impairs interaction with DAB2." evidence="9">
    <original>G</original>
    <variation>F</variation>
    <variation>H</variation>
    <variation>N</variation>
    <variation>S</variation>
    <variation>W</variation>
    <location>
        <position position="756"/>
    </location>
</feature>
<feature type="mutagenesis site" description="Impairs interaction with DAB2." evidence="9">
    <original>G</original>
    <variation>Y</variation>
    <location>
        <position position="756"/>
    </location>
</feature>
<feature type="mutagenesis site" description="Greatly promotes interaction with DAB2." evidence="9 11">
    <original>Y</original>
    <variation>F</variation>
    <location>
        <position position="757"/>
    </location>
</feature>
<feature type="mutagenesis site" description="Greatly impairs interaction with DAB2." evidence="9 11">
    <original>Y</original>
    <variation>G</variation>
    <variation>H</variation>
    <variation>V</variation>
    <location>
        <position position="757"/>
    </location>
</feature>
<feature type="mutagenesis site" description="No MAPK8IP1 nor APBA1 nor APBB1 nor DAB1 binding." evidence="9 11">
    <original>Y</original>
    <variation>G</variation>
    <location>
        <position position="757"/>
    </location>
</feature>
<feature type="mutagenesis site" description="Impairs interaction with DAB2." evidence="9 11">
    <original>Y</original>
    <variation>I</variation>
    <variation>W</variation>
    <location>
        <position position="757"/>
    </location>
</feature>
<feature type="mutagenesis site" description="No MAPK8IP1 nor APBA1 nor Dab1 binding. No effect on APBB1 binding." evidence="9 11">
    <original>N</original>
    <variation>A</variation>
    <location>
        <position position="759"/>
    </location>
</feature>
<feature type="mutagenesis site" description="Greatly impairs interaction with DAB2." evidence="9 11">
    <original>N</original>
    <variation>G</variation>
    <variation>L</variation>
    <variation>M</variation>
    <variation>P</variation>
    <location>
        <position position="759"/>
    </location>
</feature>
<feature type="mutagenesis site" description="Greatly impairs interaction with DAB2." evidence="9">
    <original>P</original>
    <variation>E</variation>
    <variation>F</variation>
    <variation>I</variation>
    <variation>K</variation>
    <variation>L</variation>
    <variation>Q</variation>
    <variation>R</variation>
    <variation>V</variation>
    <variation>W</variation>
    <variation>Y</variation>
    <location>
        <position position="760"/>
    </location>
</feature>
<feature type="mutagenesis site" description="No MAPK8IP1 nor APBA1 nor Dab1 binding. No effect on APBB1 binding." evidence="9 11">
    <original>Y</original>
    <variation>A</variation>
    <location>
        <position position="762"/>
    </location>
</feature>
<feature type="mutagenesis site" description="Greatly impairs interaction with DAB2." evidence="9 11">
    <original>Y</original>
    <variation>W</variation>
    <location>
        <position position="762"/>
    </location>
</feature>
<feature type="sequence conflict" description="In Ref. 1; AAA37139." evidence="30" ref="1">
    <original>G</original>
    <variation>V</variation>
    <location>
        <position position="211"/>
    </location>
</feature>
<feature type="sequence conflict" description="In Ref. 4; AAB41502." evidence="30" ref="4">
    <original>V</original>
    <variation>A</variation>
    <location>
        <position position="375"/>
    </location>
</feature>
<feature type="turn" evidence="37">
    <location>
        <begin position="47"/>
        <end position="49"/>
    </location>
</feature>
<feature type="strand" evidence="37">
    <location>
        <begin position="50"/>
        <end position="53"/>
    </location>
</feature>
<feature type="strand" evidence="37">
    <location>
        <begin position="56"/>
        <end position="58"/>
    </location>
</feature>
<feature type="helix" evidence="37">
    <location>
        <begin position="70"/>
        <end position="76"/>
    </location>
</feature>
<feature type="strand" evidence="37">
    <location>
        <begin position="82"/>
        <end position="87"/>
    </location>
</feature>
<feature type="strand" evidence="37">
    <location>
        <begin position="115"/>
        <end position="121"/>
    </location>
</feature>
<feature type="strand" evidence="37">
    <location>
        <begin position="127"/>
        <end position="129"/>
    </location>
</feature>
<feature type="strand" evidence="37">
    <location>
        <begin position="134"/>
        <end position="139"/>
    </location>
</feature>
<feature type="helix" evidence="37">
    <location>
        <begin position="147"/>
        <end position="160"/>
    </location>
</feature>
<feature type="strand" evidence="37">
    <location>
        <begin position="164"/>
        <end position="175"/>
    </location>
</feature>
<feature type="strand" evidence="37">
    <location>
        <begin position="178"/>
        <end position="187"/>
    </location>
</feature>
<feature type="helix" evidence="36">
    <location>
        <begin position="382"/>
        <end position="419"/>
    </location>
</feature>
<feature type="turn" evidence="36">
    <location>
        <begin position="420"/>
        <end position="422"/>
    </location>
</feature>
<feature type="helix" evidence="36">
    <location>
        <begin position="425"/>
        <end position="481"/>
    </location>
</feature>
<feature type="helix" evidence="36">
    <location>
        <begin position="487"/>
        <end position="518"/>
    </location>
</feature>
<feature type="helix" evidence="36">
    <location>
        <begin position="520"/>
        <end position="550"/>
    </location>
</feature>
<feature type="helix" evidence="36">
    <location>
        <begin position="552"/>
        <end position="581"/>
    </location>
</feature>
<feature type="helix" evidence="35">
    <location>
        <begin position="744"/>
        <end position="753"/>
    </location>
</feature>
<comment type="function">
    <text evidence="1 2 14">Functions as a cell surface receptor and performs physiological functions on the surface of neurons relevant to neurite growth, neuronal adhesion and axonogenesis. Interaction between APP molecules on neighboring cells promotes synaptogenesis. Involved in cell mobility and transcription regulation through protein-protein interactions. Can promote transcription activation through binding to APBB1-KAT5 and inhibit Notch signaling through interaction with Numb. Couples to apoptosis-inducing pathways such as those mediated by G(o) and JIP. Inhibits G(o)-alpha ATPase activity (By similarity). Acts as a kinesin I membrane receptor, mediating the axonal transport of beta-secretase and presenilin 1 (By similarity). By acting as a kinesin I membrane receptor, plays a role in axonal anterograde transport of cargo towards synapses in axons (By similarity). May be involved in copper homeostasis/oxidative stress through copper ion reduction. Can regulate neurite outgrowth through binding to components of the extracellular matrix such as heparin and collagen I and IV (By similarity). The splice isoforms that contain the BPTI domain possess protease inhibitor activity. Induces a AGER-dependent pathway that involves activation of p38 MAPK, resulting in internalization of amyloid-beta peptide and leading to mitochondrial dysfunction in cultured cortical neurons (By similarity). Provides Cu(2+) ions for GPC1 which are required for release of nitric oxide (NO) and subsequent degradation of the heparan sulfate chains on GPC1.</text>
</comment>
<comment type="function">
    <text evidence="1">Amyloid-beta peptides are lipophilic metal chelators with metal-reducing activity. Binds transient metals such as copper, zinc and iron. Rat and mouse amyloid-beta peptides bind only weakly transient metals and have little reducing activity due to substitutions of transient metal chelating residues. Amyloid-beta protein 42 may activate mononuclear phagocytes in the brain and elicit inflammatory responses. Promotes both tau aggregation and TPK II-mediated phosphorylation. Also binds GPC1 in lipid rafts (By similarity).</text>
</comment>
<comment type="function">
    <text evidence="14">The gamma-CTF peptides as well as the caspase-cleaved peptides, including C31, are potent enhancers of neuronal apoptosis.</text>
</comment>
<comment type="subunit">
    <text evidence="2 3 15 16 17 18 20 24 25">Binds, via its C-terminus, to the PID domain of several cytoplasmic proteins, including APBB family members, the APBA family, MAPK8IP1, SHC1, NUMB and DAB1. Binding to DAB1 inhibits its serine phosphorylation. Interacts (via NPXY motif) with DAB2 (via PID domain); the interaction is impaired by tyrosine phosphorylation of the NPXY motif. Also interacts with GPCR-like protein BPP, APPBP1, IB1, KNS2 (via its TPR domains), APPBP2 (via BaSS) and DDB1 (By similarity). In vitro, it binds MAPT via the MT-binding domains (By similarity). Associates with microtubules in the presence of ATP and in a kinesin-dependent manner (By similarity). Interacts, through a C-terminal domain, with GNAO1 (By similarity). Amyloid-beta protein 42 binds CHRNA7 in hippocampal neurons (By similarity). Amyloid-beta associates with HADH2 (By similarity). Interacts with ANKS1B and AGER (By similarity). Interacts with CPEB1. Interacts with ITM2B. Interacts with ITM2C. Interacts with IDE. Can form homodimers; dimerization is enhanced in the presence of Cu(2+) ions. Can form homodimers; this is promoted by heparin binding (By similarity). Amyloid-beta protein 40 interacts with S100A9 (By similarity). CTF-alpha product of APP interacts with GSAP (By similarity). Isoform APP695 interacts with SORL1 (via N-terminal ectodomain); this interaction retains APP in the trans-Golgi network and reduces processing into soluble APP-alpha and amyloid-beta peptides (PubMed:16174740, PubMed:16407538). The C99 fragment also interacts with SORL1 (PubMed:16407538). Isoform APP751 interacts with SORL1 (PubMed:16174740). Isoform APP770 interacts with SORL1 (PubMed:16174740). Interacts with PLD3 (By similarity). Interacts with VDAC1 (PubMed:25168729). Interacts with NSG1; could regulate APP processing (PubMed:21084623). Amyloid-beta protein 42 interacts with FPR2 (By similarity). Interacts with SYT7 (PubMed:30429473). Interacts (via transmembrane region) with PSEN1; the interaction is direct (By similarity). Interacts with LRRK2 (PubMed:28720718). Interacts (via cytoplasmic domain) with KIF5B (By similarity). Interacts (via C-terminus) with APBB2/FE65L1 (via C-terminus) (PubMed:18650440). Interacts (via intracellular domain) with APBB3 (By similarity).</text>
</comment>
<comment type="interaction">
    <interactant intactId="EBI-78814">
        <id>P12023</id>
    </interactant>
    <interactant intactId="EBI-81669">
        <id>P98084</id>
        <label>Apba2</label>
    </interactant>
    <organismsDiffer>false</organismsDiffer>
    <experiments>2</experiments>
</comment>
<comment type="interaction">
    <interactant intactId="EBI-78814">
        <id>P12023</id>
    </interactant>
    <interactant intactId="EBI-81338">
        <id>Q9QXJ1</id>
        <label>Apbb1</label>
    </interactant>
    <organismsDiffer>false</organismsDiffer>
    <experiments>2</experiments>
</comment>
<comment type="interaction">
    <interactant intactId="EBI-78814">
        <id>P12023</id>
    </interactant>
    <interactant intactId="EBI-399929">
        <id>Q03157</id>
        <label>Aplp1</label>
    </interactant>
    <organismsDiffer>false</organismsDiffer>
    <experiments>4</experiments>
</comment>
<comment type="interaction">
    <interactant intactId="EBI-78814">
        <id>P12023</id>
    </interactant>
    <interactant intactId="EBI-446708">
        <id>Q06335</id>
        <label>Aplp2</label>
    </interactant>
    <organismsDiffer>false</organismsDiffer>
    <experiments>3</experiments>
</comment>
<comment type="interaction">
    <interactant intactId="EBI-78814">
        <id>P12023</id>
    </interactant>
    <interactant intactId="EBI-644340">
        <id>P14211</id>
        <label>Calr</label>
    </interactant>
    <organismsDiffer>false</organismsDiffer>
    <experiments>4</experiments>
</comment>
<comment type="interaction">
    <interactant intactId="EBI-78814">
        <id>P12023</id>
    </interactant>
    <interactant intactId="EBI-81680">
        <id>P97318</id>
        <label>Dab1</label>
    </interactant>
    <organismsDiffer>false</organismsDiffer>
    <experiments>3</experiments>
</comment>
<comment type="interaction">
    <interactant intactId="EBI-78814">
        <id>P12023</id>
    </interactant>
    <interactant intactId="EBI-300895">
        <id>Q62108</id>
        <label>Dlg4</label>
    </interactant>
    <organismsDiffer>false</organismsDiffer>
    <experiments>4</experiments>
</comment>
<comment type="interaction">
    <interactant intactId="EBI-78814">
        <id>P12023</id>
    </interactant>
    <interactant intactId="EBI-16166902">
        <id>Q8BGT1</id>
        <label>Flrt3</label>
    </interactant>
    <organismsDiffer>false</organismsDiffer>
    <experiments>2</experiments>
</comment>
<comment type="interaction">
    <interactant intactId="EBI-78814">
        <id>P12023</id>
    </interactant>
    <interactant intactId="EBI-2012981">
        <id>Q9D1T0</id>
        <label>Lingo1</label>
    </interactant>
    <organismsDiffer>false</organismsDiffer>
    <experiments>2</experiments>
</comment>
<comment type="interaction">
    <interactant intactId="EBI-78814">
        <id>P12023</id>
    </interactant>
    <interactant intactId="EBI-288461">
        <id>Q9WVI9-1</id>
        <label>Mapk8ip1</label>
    </interactant>
    <organismsDiffer>false</organismsDiffer>
    <experiments>3</experiments>
</comment>
<comment type="interaction">
    <interactant intactId="EBI-78814">
        <id>P12023</id>
    </interactant>
    <interactant intactId="EBI-645522">
        <id>P27671</id>
        <label>Rasgrf1</label>
    </interactant>
    <organismsDiffer>false</organismsDiffer>
    <experiments>2</experiments>
</comment>
<comment type="interaction">
    <interactant intactId="EBI-78814">
        <id>P12023</id>
    </interactant>
    <interactant intactId="EBI-79107">
        <id>Q61120</id>
        <label>Shc3</label>
    </interactant>
    <organismsDiffer>false</organismsDiffer>
    <experiments>2</experiments>
</comment>
<comment type="interaction">
    <interactant intactId="EBI-78814">
        <id>P12023</id>
    </interactant>
    <interactant intactId="EBI-2931424">
        <id>Q9JHI9</id>
        <label>Slc40a1</label>
    </interactant>
    <organismsDiffer>false</organismsDiffer>
    <experiments>2</experiments>
</comment>
<comment type="interaction">
    <interactant intactId="EBI-78814">
        <id>P12023</id>
    </interactant>
    <interactant intactId="EBI-7540114">
        <id>O88307</id>
        <label>Sorl1</label>
    </interactant>
    <organismsDiffer>false</organismsDiffer>
    <experiments>3</experiments>
</comment>
<comment type="interaction">
    <interactant intactId="EBI-78814">
        <id>P12023</id>
    </interactant>
    <interactant intactId="EBI-6985663">
        <id>Q6PHU5</id>
        <label>Sort1</label>
    </interactant>
    <organismsDiffer>false</organismsDiffer>
    <experiments>3</experiments>
</comment>
<comment type="interaction">
    <interactant intactId="EBI-78814">
        <id>P12023</id>
    </interactant>
    <interactant intactId="EBI-21016230">
        <id>A0A1I9GFB9</id>
    </interactant>
    <organismsDiffer>false</organismsDiffer>
    <experiments>2</experiments>
</comment>
<comment type="interaction">
    <interactant intactId="EBI-78814">
        <id>P12023</id>
    </interactant>
    <interactant intactId="EBI-9005200">
        <id>P15253</id>
        <label>CALR</label>
    </interactant>
    <organismsDiffer>true</organismsDiffer>
    <experiments>2</experiments>
</comment>
<comment type="interaction">
    <interactant intactId="EBI-78814">
        <id>P12023</id>
    </interactant>
    <interactant intactId="EBI-78404">
        <id>Q9UQF2</id>
        <label>MAPK8IP1</label>
    </interactant>
    <organismsDiffer>true</organismsDiffer>
    <experiments>2</experiments>
</comment>
<comment type="interaction">
    <interactant intactId="EBI-286828">
        <id>P12023-2</id>
    </interactant>
    <interactant intactId="EBI-288461">
        <id>Q9WVI9-1</id>
        <label>Mapk8ip1</label>
    </interactant>
    <organismsDiffer>false</organismsDiffer>
    <experiments>2</experiments>
</comment>
<comment type="interaction">
    <interactant intactId="EBI-14022231">
        <id>PRO_0000000118</id>
    </interactant>
    <interactant intactId="EBI-537711">
        <id>P54763</id>
        <label>Ephb2</label>
    </interactant>
    <organismsDiffer>false</organismsDiffer>
    <experiments>4</experiments>
</comment>
<comment type="interaction">
    <interactant intactId="EBI-14022231">
        <id>PRO_0000000118</id>
    </interactant>
    <interactant intactId="EBI-768613">
        <id>P04925</id>
        <label>Prnp</label>
    </interactant>
    <organismsDiffer>false</organismsDiffer>
    <experiments>2</experiments>
</comment>
<comment type="subcellular location">
    <subcellularLocation>
        <location evidence="23">Cell membrane</location>
        <topology evidence="2">Single-pass type I membrane protein</topology>
    </subcellularLocation>
    <subcellularLocation>
        <location evidence="2">Membrane</location>
        <topology evidence="2">Single-pass type I membrane protein</topology>
    </subcellularLocation>
    <subcellularLocation>
        <location evidence="3">Perikaryon</location>
    </subcellularLocation>
    <subcellularLocation>
        <location evidence="3">Cell projection</location>
        <location evidence="3">Growth cone</location>
    </subcellularLocation>
    <subcellularLocation>
        <location evidence="2">Membrane</location>
        <location evidence="2">Clathrin-coated pit</location>
    </subcellularLocation>
    <subcellularLocation>
        <location evidence="21 23">Early endosome</location>
    </subcellularLocation>
    <subcellularLocation>
        <location evidence="2">Cytoplasmic vesicle</location>
    </subcellularLocation>
    <subcellularLocation>
        <location evidence="19">Golgi apparatus</location>
        <location evidence="19">trans-Golgi network</location>
    </subcellularLocation>
    <text evidence="2 14 19">Cell surface protein that rapidly becomes internalized via clathrin-coated pits. Only a minor proportion is present at the cell membrane; most of the protein is present in intracellular vesicles. During maturation, the immature APP (N-glycosylated in the endoplasmic reticulum) moves to the Golgi complex where complete maturation occurs (O-glycosylated and sulfated). After alpha-secretase cleavage, soluble APP is released into the extracellular space and the C-terminal is internalized to endosomes and lysosomes. Some APP accumulates in secretory transport vesicles leaving the late Golgi compartment and returns to the cell surface. APP sorts to the basolateral surface in epithelial cells. During neuronal differentiation, the Thr-743 phosphorylated form is located mainly in growth cones, moderately in neurites and sparingly in the cell body. Casein kinase phosphorylation can occur either at the cell surface or within a post-Golgi compartment (By similarity). Associates with GPC1 in perinuclear compartments (PubMed:15677459). Colocalizes with SORL1 in a vesicular pattern in cytoplasm and perinuclear regions (By similarity). Upon neuronal activation, routed into BACE1-positive recycling endosomes via a clathrin -dependent mechanism (PubMed:23931995).</text>
</comment>
<comment type="subcellular location">
    <molecule>C99</molecule>
    <subcellularLocation>
        <location evidence="2">Early endosome</location>
    </subcellularLocation>
</comment>
<comment type="subcellular location">
    <molecule>C83</molecule>
    <subcellularLocation>
        <location evidence="2">Endoplasmic reticulum</location>
    </subcellularLocation>
    <subcellularLocation>
        <location evidence="2">Golgi apparatus</location>
    </subcellularLocation>
    <subcellularLocation>
        <location evidence="2">Early endosome</location>
    </subcellularLocation>
</comment>
<comment type="subcellular location">
    <molecule>Soluble APP-beta</molecule>
    <subcellularLocation>
        <location evidence="30">Secreted</location>
    </subcellularLocation>
</comment>
<comment type="subcellular location">
    <molecule>Amyloid-beta protein 42</molecule>
    <subcellularLocation>
        <location>Cell surface</location>
    </subcellularLocation>
    <text evidence="2">Associates with FPR2 at the cell surface and the complex is then rapidly internalized.</text>
</comment>
<comment type="subcellular location">
    <molecule>Gamma-secretase C-terminal fragment 59</molecule>
    <subcellularLocation>
        <location evidence="24">Nucleus</location>
    </subcellularLocation>
    <subcellularLocation>
        <location evidence="2">Cytoplasm</location>
    </subcellularLocation>
    <text evidence="2 24">Located to both the cytoplasm and nuclei of neurons. It can be translocated to the nucleus through association with APBB1 (Fe65) (By similarity). In dopaminergic neurons, the phosphorylated Thr-743 form is localized to the nucleus (PubMed:28720718).</text>
</comment>
<comment type="alternative products">
    <event type="alternative splicing"/>
    <isoform>
        <id>P12023-1</id>
        <name>APP770</name>
        <sequence type="displayed"/>
    </isoform>
    <isoform>
        <id>P12023-2</id>
        <name>APP695</name>
        <sequence type="described" ref="VSP_000012 VSP_000013"/>
    </isoform>
    <isoform>
        <id>P12023-3</id>
        <name>APP751</name>
        <sequence type="described" ref="VSP_000014"/>
    </isoform>
    <isoform>
        <id>P12023-4</id>
        <name>APP714</name>
        <sequence type="not described"/>
    </isoform>
    <text>Additional isoforms seem to exist.</text>
</comment>
<comment type="tissue specificity">
    <text evidence="22 23 24">Expressed in the brain with expression in cortex, cerebellum, hippocampus, olfactory bulb, neurons, astrocytes and microglia (at protein level) (PubMed:25757569, PubMed:26260791, PubMed:28720718). Expressed in the retinal lens (PubMed:25757569). Expressed at a low level in muscle cells (at protein level) (PubMed:25757569).</text>
</comment>
<comment type="tissue specificity">
    <molecule>Isoform APP770</molecule>
    <text evidence="26">Expressed in kidney.</text>
</comment>
<comment type="tissue specificity">
    <molecule>Isoform APP751</molecule>
    <text evidence="26">Widely expressed (PubMed:8510506). Expressed in several different brain regions including hippocampus, substantia nigra pars compacta and cerebellum (PubMed:8510506). Within the cerebellum, abundantly expressed in Purkinje cells (PubMed:8510506).</text>
</comment>
<comment type="tissue specificity">
    <molecule>Isoform APP695</molecule>
    <text evidence="26">Expressed in the brain, kidney and liver (PubMed:8510506). Expressed in several different brain regions including hippocampus, substantia nigra pars compacta and cerebellum (PubMed:8510506). Within the cerebellum, abundantly expressed in Purkinje cells (PubMed:8510506).</text>
</comment>
<comment type="tissue specificity">
    <molecule>Isoform APP714</molecule>
    <text evidence="26">Expressed in several different brain regions including hippocampus, substantia nigra pars compacta and cerebellum (PubMed:8510506). Within the cerebellum, abundantly expressed in Purkinje cells (PubMed:8510506).</text>
</comment>
<comment type="developmental stage">
    <text evidence="23">Expressed in 4 to 24 week old mice.</text>
</comment>
<comment type="induction">
    <text evidence="23">Up-regulated in animals on a high-fat diet compared to a regular diet.</text>
</comment>
<comment type="domain">
    <text evidence="2">The transmembrane helix undergoes a conformation change and unravels partially when bound to PSEN1, facilitating cleavage by PSEN1.</text>
</comment>
<comment type="domain">
    <text evidence="2">The basolateral sorting signal (BaSS) is required for sorting of membrane proteins to the basolateral surface of epithelial cells.</text>
</comment>
<comment type="domain">
    <text evidence="2">The GFLD subdomain binds Cu(2+) ions; this promotes homodimerization.</text>
</comment>
<comment type="domain">
    <text evidence="2">The NPXY sequence motif found in many tyrosine-phosphorylated proteins is required for the specific binding of the PID domain. However, additional amino acids either N- or C-terminal to the NPXY motif are often required for complete interaction. The PID domain-containing proteins which bind APP require the YENPTY motif for full interaction. These interactions are independent of phosphorylation on the terminal tyrosine residue. The YENPXY site is also involved in clathrin-mediated endocytosis.</text>
</comment>
<comment type="domain">
    <text evidence="2">The C-terminal region can bind zinc ions; this favors dimerization and formation of higher oligomers.</text>
</comment>
<comment type="domain">
    <text evidence="2">The OX-2 motif shows some similarity to a region in the N-terminus of CD200/MOX2.</text>
</comment>
<comment type="PTM">
    <text evidence="2 12 19">Proteolytically processed under normal cellular conditions (PubMed:11553691, PubMed:23931995). Cleavage either by alpha-secretase, beta-secretase or theta-secretase leads to generation and extracellular release of soluble APP peptides, S-APP-alpha and S-APP-beta, and the retention of corresponding membrane-anchored C-terminal fragments, C80, C83 and C99 (PubMed:11553691, PubMed:23931995). Subsequent processing of C80 and C83 by gamma-secretase yields P3 peptides. This is the major secretory pathway and is non-amyloidogenic. Alternatively, presenilin/nicastrin-mediated gamma-secretase processing of C99 releases the amyloid-beta proteins, amyloid-beta protein 40 and amyloid-beta protein 42, major components of amyloid plaques, and the cytotoxic C-terminal fragments, gamma-CTF(50), gamma-CTF(57) and gamma-CTF(59). PSEN1 cleavage is more efficient with C83 than with C99 as substrate (in vitro). Amyloid-beta protein 40 and Amyloid-beta protein 42 are cleaved by ACE. Many other minor amyloid-beta peptides, amyloid-beta 1-X peptides, are found in cerebral spinal fluid (CSF) including the amyloid-beta X-15 peptides, produced from the cleavage by alpha-secretase (By similarity).</text>
</comment>
<comment type="PTM">
    <text evidence="2">Proteolytically cleaved by caspases during neuronal apoptosis. Cleavage at Asp-739 by either CASP6, CASP8 or CASP9 results in the production of the neurotoxic C31 peptide and the increased production of amyloid-beta peptides.</text>
</comment>
<comment type="PTM">
    <text evidence="2">N- and O-glycosylated.</text>
</comment>
<comment type="PTM">
    <text evidence="2 24">Phosphorylation in the C-terminal on tyrosine, threonine and serine residues is neuron-specific (By similarity). Phosphorylation can affect APP processing, neuronal differentiation and interaction with other proteins (By similarity). Phosphorylated on Thr-743 in neuronal cells by Cdc5 kinase and Mapk10, in dividing cells by Cdc2 kinase in a cell-cycle dependent manner with maximal levels at the G2/M phase and, in vitro, by GSK-3-beta (By similarity). The Thr-743 phosphorylated form causes a conformational change which reduces binding of Fe65 family members (By similarity). In dopaminergic (DA) neurons, phosphorylation on Thr-743 by LRKK2 promotes the production and the nuclear translocation of the APP intracellular domain (AICD) which induces DA neuron apoptosis (PubMed:28720718). Phosphorylation on Tyr-757 is required for SHC binding (By similarity). Phosphorylated in the extracellular domain by casein kinases on both soluble and membrane-bound APP (By similarity). This phosphorylation is inhibited by heparin (By similarity).</text>
</comment>
<comment type="PTM">
    <text evidence="1">Extracellular binding and reduction of copper, results in a corresponding oxidation of Cys-144 and Cys-158, and the formation of a disulfide bond.</text>
</comment>
<comment type="PTM">
    <text evidence="1">Trophic-factor deprivation triggers the cleavage of surface APP by beta-secretase to release sAPP-beta which is further cleaved to release an N-terminal fragment of APP (N-APP).</text>
</comment>
<comment type="PTM">
    <text evidence="13">Amyloid-beta peptides are degraded by IDE.</text>
</comment>
<comment type="PTM">
    <text evidence="2">Sulfated on tyrosine residues.</text>
</comment>
<comment type="miscellaneous">
    <text evidence="2 30">Chelation of metal ions, notably copper, iron and zinc, can induce histidine-bridging between amyloid-beta molecules resulting in amyloid-beta-metal aggregates. Rat and mouse amyloid-beta peptides have an arginine residue substituted for the bridging histidine residue and are thus less capable of forming amyloid aggregates. Extracellular zinc-binding increases binding of heparin to APP and inhibits collagen-binding (By similarity).</text>
</comment>
<comment type="similarity">
    <text evidence="6">Belongs to the APP family.</text>
</comment>
<organism>
    <name type="scientific">Mus musculus</name>
    <name type="common">Mouse</name>
    <dbReference type="NCBI Taxonomy" id="10090"/>
    <lineage>
        <taxon>Eukaryota</taxon>
        <taxon>Metazoa</taxon>
        <taxon>Chordata</taxon>
        <taxon>Craniata</taxon>
        <taxon>Vertebrata</taxon>
        <taxon>Euteleostomi</taxon>
        <taxon>Mammalia</taxon>
        <taxon>Eutheria</taxon>
        <taxon>Euarchontoglires</taxon>
        <taxon>Glires</taxon>
        <taxon>Rodentia</taxon>
        <taxon>Myomorpha</taxon>
        <taxon>Muroidea</taxon>
        <taxon>Muridae</taxon>
        <taxon>Murinae</taxon>
        <taxon>Mus</taxon>
        <taxon>Mus</taxon>
    </lineage>
</organism>
<keyword id="KW-0002">3D-structure</keyword>
<keyword id="KW-0025">Alternative splicing</keyword>
<keyword id="KW-0034">Amyloid</keyword>
<keyword id="KW-0053">Apoptosis</keyword>
<keyword id="KW-0130">Cell adhesion</keyword>
<keyword id="KW-1003">Cell membrane</keyword>
<keyword id="KW-0966">Cell projection</keyword>
<keyword id="KW-0168">Coated pit</keyword>
<keyword id="KW-0186">Copper</keyword>
<keyword id="KW-0963">Cytoplasm</keyword>
<keyword id="KW-0968">Cytoplasmic vesicle</keyword>
<keyword id="KW-1015">Disulfide bond</keyword>
<keyword id="KW-0254">Endocytosis</keyword>
<keyword id="KW-0256">Endoplasmic reticulum</keyword>
<keyword id="KW-0967">Endosome</keyword>
<keyword id="KW-0325">Glycoprotein</keyword>
<keyword id="KW-0333">Golgi apparatus</keyword>
<keyword id="KW-0358">Heparin-binding</keyword>
<keyword id="KW-0408">Iron</keyword>
<keyword id="KW-1017">Isopeptide bond</keyword>
<keyword id="KW-0472">Membrane</keyword>
<keyword id="KW-0479">Metal-binding</keyword>
<keyword id="KW-0914">Notch signaling pathway</keyword>
<keyword id="KW-0539">Nucleus</keyword>
<keyword id="KW-0597">Phosphoprotein</keyword>
<keyword id="KW-0646">Protease inhibitor</keyword>
<keyword id="KW-1185">Reference proteome</keyword>
<keyword id="KW-0964">Secreted</keyword>
<keyword id="KW-0722">Serine protease inhibitor</keyword>
<keyword id="KW-0732">Signal</keyword>
<keyword id="KW-0765">Sulfation</keyword>
<keyword id="KW-0812">Transmembrane</keyword>
<keyword id="KW-1133">Transmembrane helix</keyword>
<keyword id="KW-0832">Ubl conjugation</keyword>
<keyword id="KW-0862">Zinc</keyword>